<reference key="1">
    <citation type="journal article" date="2001" name="Nat. Genet.">
        <title>The mouse Ames waltzer hearing-loss mutant is caused by mutation of Pcdh15, a novel protocadherin gene.</title>
        <authorList>
            <person name="Alagramam K.N."/>
            <person name="Murcia C.L."/>
            <person name="Kwon H.Y."/>
            <person name="Pawlowski K.S."/>
            <person name="Wright C.G."/>
            <person name="Woychik R.P."/>
        </authorList>
    </citation>
    <scope>NUCLEOTIDE SEQUENCE [MRNA] (ISOFORM 1)</scope>
</reference>
<reference key="2">
    <citation type="journal article" date="2006" name="Invest. Ophthalmol. Vis. Sci.">
        <title>Ames Waltzer deaf mice have reduced electroretinogram amplitudes and complex alternative splicing of Pcdh15 transcripts.</title>
        <authorList>
            <person name="Haywood-Watson R.J. II"/>
            <person name="Ahmed Z.M."/>
            <person name="Kjellstrom S."/>
            <person name="Bush R.A."/>
            <person name="Takada Y."/>
            <person name="Hampton L.L."/>
            <person name="Battey J.F."/>
            <person name="Sieving P.A."/>
            <person name="Friedman T.B."/>
        </authorList>
    </citation>
    <scope>NUCLEOTIDE SEQUENCE [MRNA] (ISOFORM 24)</scope>
    <scope>TISSUE SPECIFICITY</scope>
    <source>
        <tissue>Retina</tissue>
    </source>
</reference>
<reference key="3">
    <citation type="journal article" date="2006" name="J. Neurosci.">
        <title>The tip-link antigen, a protein associated with the transduction complex of sensory hair cells, is protocadherin-15.</title>
        <authorList>
            <person name="Ahmed Z.M."/>
            <person name="Goodyear R."/>
            <person name="Riazuddin S."/>
            <person name="Lagziel A."/>
            <person name="Legan P.K."/>
            <person name="Behra M."/>
            <person name="Burgess S.M."/>
            <person name="Lilley K.S."/>
            <person name="Wilcox E.R."/>
            <person name="Riazuddin S."/>
            <person name="Griffith A.J."/>
            <person name="Frolenkov G.I."/>
            <person name="Belyantseva I.A."/>
            <person name="Richardson G.P."/>
            <person name="Friedman T.B."/>
        </authorList>
    </citation>
    <scope>NUCLEOTIDE SEQUENCE [MRNA] (ISOFORMS 2; 3; 4; 5; 6; 7; 8; 9; 10; 11; 12; 13; 14; 15; 16; 17; 18; 19; 20; 21; 22 AND 23)</scope>
    <scope>DEVELOPMENTAL STAGE</scope>
    <source>
        <strain>C57BL/6J</strain>
        <tissue>Inner ear</tissue>
    </source>
</reference>
<reference key="4">
    <citation type="journal article" date="2005" name="Science">
        <title>The transcriptional landscape of the mammalian genome.</title>
        <authorList>
            <person name="Carninci P."/>
            <person name="Kasukawa T."/>
            <person name="Katayama S."/>
            <person name="Gough J."/>
            <person name="Frith M.C."/>
            <person name="Maeda N."/>
            <person name="Oyama R."/>
            <person name="Ravasi T."/>
            <person name="Lenhard B."/>
            <person name="Wells C."/>
            <person name="Kodzius R."/>
            <person name="Shimokawa K."/>
            <person name="Bajic V.B."/>
            <person name="Brenner S.E."/>
            <person name="Batalov S."/>
            <person name="Forrest A.R."/>
            <person name="Zavolan M."/>
            <person name="Davis M.J."/>
            <person name="Wilming L.G."/>
            <person name="Aidinis V."/>
            <person name="Allen J.E."/>
            <person name="Ambesi-Impiombato A."/>
            <person name="Apweiler R."/>
            <person name="Aturaliya R.N."/>
            <person name="Bailey T.L."/>
            <person name="Bansal M."/>
            <person name="Baxter L."/>
            <person name="Beisel K.W."/>
            <person name="Bersano T."/>
            <person name="Bono H."/>
            <person name="Chalk A.M."/>
            <person name="Chiu K.P."/>
            <person name="Choudhary V."/>
            <person name="Christoffels A."/>
            <person name="Clutterbuck D.R."/>
            <person name="Crowe M.L."/>
            <person name="Dalla E."/>
            <person name="Dalrymple B.P."/>
            <person name="de Bono B."/>
            <person name="Della Gatta G."/>
            <person name="di Bernardo D."/>
            <person name="Down T."/>
            <person name="Engstrom P."/>
            <person name="Fagiolini M."/>
            <person name="Faulkner G."/>
            <person name="Fletcher C.F."/>
            <person name="Fukushima T."/>
            <person name="Furuno M."/>
            <person name="Futaki S."/>
            <person name="Gariboldi M."/>
            <person name="Georgii-Hemming P."/>
            <person name="Gingeras T.R."/>
            <person name="Gojobori T."/>
            <person name="Green R.E."/>
            <person name="Gustincich S."/>
            <person name="Harbers M."/>
            <person name="Hayashi Y."/>
            <person name="Hensch T.K."/>
            <person name="Hirokawa N."/>
            <person name="Hill D."/>
            <person name="Huminiecki L."/>
            <person name="Iacono M."/>
            <person name="Ikeo K."/>
            <person name="Iwama A."/>
            <person name="Ishikawa T."/>
            <person name="Jakt M."/>
            <person name="Kanapin A."/>
            <person name="Katoh M."/>
            <person name="Kawasawa Y."/>
            <person name="Kelso J."/>
            <person name="Kitamura H."/>
            <person name="Kitano H."/>
            <person name="Kollias G."/>
            <person name="Krishnan S.P."/>
            <person name="Kruger A."/>
            <person name="Kummerfeld S.K."/>
            <person name="Kurochkin I.V."/>
            <person name="Lareau L.F."/>
            <person name="Lazarevic D."/>
            <person name="Lipovich L."/>
            <person name="Liu J."/>
            <person name="Liuni S."/>
            <person name="McWilliam S."/>
            <person name="Madan Babu M."/>
            <person name="Madera M."/>
            <person name="Marchionni L."/>
            <person name="Matsuda H."/>
            <person name="Matsuzawa S."/>
            <person name="Miki H."/>
            <person name="Mignone F."/>
            <person name="Miyake S."/>
            <person name="Morris K."/>
            <person name="Mottagui-Tabar S."/>
            <person name="Mulder N."/>
            <person name="Nakano N."/>
            <person name="Nakauchi H."/>
            <person name="Ng P."/>
            <person name="Nilsson R."/>
            <person name="Nishiguchi S."/>
            <person name="Nishikawa S."/>
            <person name="Nori F."/>
            <person name="Ohara O."/>
            <person name="Okazaki Y."/>
            <person name="Orlando V."/>
            <person name="Pang K.C."/>
            <person name="Pavan W.J."/>
            <person name="Pavesi G."/>
            <person name="Pesole G."/>
            <person name="Petrovsky N."/>
            <person name="Piazza S."/>
            <person name="Reed J."/>
            <person name="Reid J.F."/>
            <person name="Ring B.Z."/>
            <person name="Ringwald M."/>
            <person name="Rost B."/>
            <person name="Ruan Y."/>
            <person name="Salzberg S.L."/>
            <person name="Sandelin A."/>
            <person name="Schneider C."/>
            <person name="Schoenbach C."/>
            <person name="Sekiguchi K."/>
            <person name="Semple C.A."/>
            <person name="Seno S."/>
            <person name="Sessa L."/>
            <person name="Sheng Y."/>
            <person name="Shibata Y."/>
            <person name="Shimada H."/>
            <person name="Shimada K."/>
            <person name="Silva D."/>
            <person name="Sinclair B."/>
            <person name="Sperling S."/>
            <person name="Stupka E."/>
            <person name="Sugiura K."/>
            <person name="Sultana R."/>
            <person name="Takenaka Y."/>
            <person name="Taki K."/>
            <person name="Tammoja K."/>
            <person name="Tan S.L."/>
            <person name="Tang S."/>
            <person name="Taylor M.S."/>
            <person name="Tegner J."/>
            <person name="Teichmann S.A."/>
            <person name="Ueda H.R."/>
            <person name="van Nimwegen E."/>
            <person name="Verardo R."/>
            <person name="Wei C.L."/>
            <person name="Yagi K."/>
            <person name="Yamanishi H."/>
            <person name="Zabarovsky E."/>
            <person name="Zhu S."/>
            <person name="Zimmer A."/>
            <person name="Hide W."/>
            <person name="Bult C."/>
            <person name="Grimmond S.M."/>
            <person name="Teasdale R.D."/>
            <person name="Liu E.T."/>
            <person name="Brusic V."/>
            <person name="Quackenbush J."/>
            <person name="Wahlestedt C."/>
            <person name="Mattick J.S."/>
            <person name="Hume D.A."/>
            <person name="Kai C."/>
            <person name="Sasaki D."/>
            <person name="Tomaru Y."/>
            <person name="Fukuda S."/>
            <person name="Kanamori-Katayama M."/>
            <person name="Suzuki M."/>
            <person name="Aoki J."/>
            <person name="Arakawa T."/>
            <person name="Iida J."/>
            <person name="Imamura K."/>
            <person name="Itoh M."/>
            <person name="Kato T."/>
            <person name="Kawaji H."/>
            <person name="Kawagashira N."/>
            <person name="Kawashima T."/>
            <person name="Kojima M."/>
            <person name="Kondo S."/>
            <person name="Konno H."/>
            <person name="Nakano K."/>
            <person name="Ninomiya N."/>
            <person name="Nishio T."/>
            <person name="Okada M."/>
            <person name="Plessy C."/>
            <person name="Shibata K."/>
            <person name="Shiraki T."/>
            <person name="Suzuki S."/>
            <person name="Tagami M."/>
            <person name="Waki K."/>
            <person name="Watahiki A."/>
            <person name="Okamura-Oho Y."/>
            <person name="Suzuki H."/>
            <person name="Kawai J."/>
            <person name="Hayashizaki Y."/>
        </authorList>
    </citation>
    <scope>NUCLEOTIDE SEQUENCE [LARGE SCALE MRNA] (ISOFORM 21)</scope>
    <scope>NUCLEOTIDE SEQUENCE [LARGE SCALE MRNA] OF 1763-1943 (ISOFORMS 1/2/4/5/6/7/8/9)</scope>
    <source>
        <strain>C57BL/6J</strain>
        <tissue>Cerebellum</tissue>
    </source>
</reference>
<reference key="5">
    <citation type="journal article" date="2009" name="PLoS Biol.">
        <title>Lineage-specific biology revealed by a finished genome assembly of the mouse.</title>
        <authorList>
            <person name="Church D.M."/>
            <person name="Goodstadt L."/>
            <person name="Hillier L.W."/>
            <person name="Zody M.C."/>
            <person name="Goldstein S."/>
            <person name="She X."/>
            <person name="Bult C.J."/>
            <person name="Agarwala R."/>
            <person name="Cherry J.L."/>
            <person name="DiCuccio M."/>
            <person name="Hlavina W."/>
            <person name="Kapustin Y."/>
            <person name="Meric P."/>
            <person name="Maglott D."/>
            <person name="Birtle Z."/>
            <person name="Marques A.C."/>
            <person name="Graves T."/>
            <person name="Zhou S."/>
            <person name="Teague B."/>
            <person name="Potamousis K."/>
            <person name="Churas C."/>
            <person name="Place M."/>
            <person name="Herschleb J."/>
            <person name="Runnheim R."/>
            <person name="Forrest D."/>
            <person name="Amos-Landgraf J."/>
            <person name="Schwartz D.C."/>
            <person name="Cheng Z."/>
            <person name="Lindblad-Toh K."/>
            <person name="Eichler E.E."/>
            <person name="Ponting C.P."/>
        </authorList>
    </citation>
    <scope>NUCLEOTIDE SEQUENCE [LARGE SCALE GENOMIC DNA]</scope>
    <source>
        <strain>C57BL/6J</strain>
    </source>
</reference>
<reference key="6">
    <citation type="journal article" date="2011" name="Proc. Natl. Acad. Sci. U.S.A.">
        <title>Usher type 1G protein sans is a critical component of the tip-link complex, a structure controlling actin polymerization in stereocilia.</title>
        <authorList>
            <person name="Caberlotto E."/>
            <person name="Michel V."/>
            <person name="Foucher I."/>
            <person name="Bahloul A."/>
            <person name="Goodyear R.J."/>
            <person name="Pepermans E."/>
            <person name="Michalski N."/>
            <person name="Perfettini I."/>
            <person name="Alegria-Prevot O."/>
            <person name="Chardenoux S."/>
            <person name="Do Cruzeiro M."/>
            <person name="Hardelin J.P."/>
            <person name="Richardson G.P."/>
            <person name="Avan P."/>
            <person name="Weil D."/>
            <person name="Petit C."/>
        </authorList>
    </citation>
    <scope>NUCLEOTIDE SEQUENCE [MRNA] OF 1368-1943 (ISOFORMS 25 AND 26)</scope>
    <scope>INTERACTION WITH USH1G</scope>
    <scope>SUBCELLULAR LOCATION</scope>
    <source>
        <strain>SWR/J</strain>
        <tissue>Cochlea</tissue>
    </source>
</reference>
<reference key="7">
    <citation type="submission" date="2007-04" db="UniProtKB">
        <authorList>
            <person name="Lubec G."/>
            <person name="Kang S.U."/>
        </authorList>
    </citation>
    <scope>PROTEIN SEQUENCE OF 1876-1882</scope>
    <scope>IDENTIFICATION BY MASS SPECTROMETRY</scope>
    <source>
        <strain>C57BL/6J</strain>
        <tissue>Brain</tissue>
    </source>
</reference>
<reference key="8">
    <citation type="journal article" date="2001" name="Mech. Dev.">
        <title>Expression of Pcdh15 in the inner ear, nervous system and various epithelia of the developing embryo.</title>
        <authorList>
            <person name="Murcia C.L."/>
            <person name="Woychik R.P."/>
        </authorList>
    </citation>
    <scope>TISSUE SPECIFICITY</scope>
</reference>
<reference key="9">
    <citation type="journal article" date="2006" name="J. Neurosci.">
        <title>Physical and functional interaction between protocadherin 15 and myosin VIIa in mechanosensory hair cells.</title>
        <authorList>
            <person name="Senften M."/>
            <person name="Schwander M."/>
            <person name="Kazmierczak P."/>
            <person name="Lillo C."/>
            <person name="Shin J.B."/>
            <person name="Hasson T."/>
            <person name="Geleoc G.S."/>
            <person name="Gillespie P.G."/>
            <person name="Williams D."/>
            <person name="Holt J.R."/>
            <person name="Muller U."/>
        </authorList>
    </citation>
    <scope>INTERACTION WITH MYO7A</scope>
    <scope>TISSUE SPECIFICITY</scope>
</reference>
<reference key="10">
    <citation type="journal article" date="2007" name="Nature">
        <title>Cadherin 23 and protocadherin 15 interact to form tip-link filaments in sensory hair cells.</title>
        <authorList>
            <person name="Kazmierczak P."/>
            <person name="Sakaguchi H."/>
            <person name="Tokita J."/>
            <person name="Wilson-Kubalek E.M."/>
            <person name="Milligan R.A."/>
            <person name="Muller U."/>
            <person name="Kachar B."/>
        </authorList>
    </citation>
    <scope>INTERACTION WITH CDH23</scope>
    <scope>TISSUE SPECIFICITY</scope>
</reference>
<reference key="11">
    <citation type="journal article" date="2007" name="Proc. Natl. Acad. Sci. U.S.A.">
        <title>Large-scale phosphorylation analysis of mouse liver.</title>
        <authorList>
            <person name="Villen J."/>
            <person name="Beausoleil S.A."/>
            <person name="Gerber S.A."/>
            <person name="Gygi S.P."/>
        </authorList>
    </citation>
    <scope>IDENTIFICATION BY MASS SPECTROMETRY [LARGE SCALE ANALYSIS]</scope>
    <source>
        <tissue>Liver</tissue>
    </source>
</reference>
<reference key="12">
    <citation type="journal article" date="2012" name="Cell">
        <title>TMHS is an integral component of the mechanotransduction machinery of cochlear hair cells.</title>
        <authorList>
            <person name="Xiong W."/>
            <person name="Grillet N."/>
            <person name="Elledge H.M."/>
            <person name="Wagner T.F."/>
            <person name="Zhao B."/>
            <person name="Johnson K.R."/>
            <person name="Kazmierczak P."/>
            <person name="Muller U."/>
        </authorList>
    </citation>
    <scope>SUBCELLULAR LOCATION</scope>
    <scope>INTERACTION WITH LHFPL5</scope>
</reference>
<reference key="13">
    <citation type="journal article" date="2014" name="Neuron">
        <title>TMIE is an essential component of the mechanotransduction machinery of cochlear hair cells.</title>
        <authorList>
            <person name="Zhao B."/>
            <person name="Wu Z."/>
            <person name="Grillet N."/>
            <person name="Yan L."/>
            <person name="Xiong W."/>
            <person name="Harkins-Perry S."/>
            <person name="Mueller U."/>
        </authorList>
    </citation>
    <scope>IDENTIFICATION IN A COMPLEX WITH LHFPL5 AND PCDH15</scope>
</reference>
<reference key="14">
    <citation type="journal article" date="2014" name="Proc. Natl. Acad. Sci. U.S.A.">
        <title>Tip-link protein protocadherin 15 interacts with transmembrane channel-like proteins TMC1 and TMC2.</title>
        <authorList>
            <person name="Maeda R."/>
            <person name="Kindt K.S."/>
            <person name="Mo W."/>
            <person name="Morgan C.P."/>
            <person name="Erickson T."/>
            <person name="Zhao H."/>
            <person name="Clemens-Grisham R."/>
            <person name="Barr-Gillespie P.G."/>
            <person name="Nicolson T."/>
        </authorList>
    </citation>
    <scope>INTERACTION WITH TMC1 AND TMC2</scope>
</reference>
<reference key="15">
    <citation type="journal article" date="2017" name="Elife">
        <title>The murine catecholamine methyltransferase mTOMT is essential for mechanotransduction by cochlear hair cells.</title>
        <authorList>
            <person name="Cunningham C.L."/>
            <person name="Wu Z."/>
            <person name="Jafari A."/>
            <person name="Zhao B."/>
            <person name="Schrode K."/>
            <person name="Harkins-Perry S."/>
            <person name="Lauer A."/>
            <person name="Mueller U."/>
        </authorList>
    </citation>
    <scope>INTERACTION WITH TOMT</scope>
</reference>
<reference key="16">
    <citation type="journal article" date="2024" name="Nat. Commun.">
        <title>The Piezo channel is a mechano-sensitive complex component in the mammalian inner ear hair cell.</title>
        <authorList>
            <person name="Lee J.H."/>
            <person name="Perez-Flores M.C."/>
            <person name="Park S."/>
            <person name="Kim H.J."/>
            <person name="Chen Y."/>
            <person name="Kang M."/>
            <person name="Kersigo J."/>
            <person name="Choi J."/>
            <person name="Thai P.N."/>
            <person name="Woltz R.L."/>
            <person name="Perez-Flores D.C."/>
            <person name="Perkins G."/>
            <person name="Sihn C.R."/>
            <person name="Trinh P."/>
            <person name="Zhang X.D."/>
            <person name="Sirish P."/>
            <person name="Dong Y."/>
            <person name="Feng W.W."/>
            <person name="Pessah I.N."/>
            <person name="Dixon R.E."/>
            <person name="Sokolowski B."/>
            <person name="Fritzsch B."/>
            <person name="Chiamvimonvat N."/>
            <person name="Yamoah E.N."/>
        </authorList>
    </citation>
    <scope>INTERACTION WITH PIEZO1</scope>
</reference>
<reference key="17">
    <citation type="journal article" date="2012" name="Nature">
        <title>Structure of a force-conveying cadherin bond essential for inner-ear mechanotransduction.</title>
        <authorList>
            <person name="Sotomayor M."/>
            <person name="Weihofen W.A."/>
            <person name="Gaudet R."/>
            <person name="Corey D.P."/>
        </authorList>
    </citation>
    <scope>X-RAY CRYSTALLOGRAPHY (1.65 ANGSTROMS) OF 27-259 IN COMPLEX WITH CALCIUM IONS AND CDH23</scope>
    <scope>SUBUNIT</scope>
    <scope>DISULFIDE BOND</scope>
    <scope>MUTAGENESIS OF ILE-48 AND ARG-139</scope>
</reference>
<proteinExistence type="evidence at protein level"/>
<organism>
    <name type="scientific">Mus musculus</name>
    <name type="common">Mouse</name>
    <dbReference type="NCBI Taxonomy" id="10090"/>
    <lineage>
        <taxon>Eukaryota</taxon>
        <taxon>Metazoa</taxon>
        <taxon>Chordata</taxon>
        <taxon>Craniata</taxon>
        <taxon>Vertebrata</taxon>
        <taxon>Euteleostomi</taxon>
        <taxon>Mammalia</taxon>
        <taxon>Eutheria</taxon>
        <taxon>Euarchontoglires</taxon>
        <taxon>Glires</taxon>
        <taxon>Rodentia</taxon>
        <taxon>Myomorpha</taxon>
        <taxon>Muroidea</taxon>
        <taxon>Muridae</taxon>
        <taxon>Murinae</taxon>
        <taxon>Mus</taxon>
        <taxon>Mus</taxon>
    </lineage>
</organism>
<accession>Q99PJ1</accession>
<accession>D6RCH0</accession>
<accession>E9Q7D7</accession>
<accession>E9Q7R1</accession>
<accession>E9Q7R2</accession>
<accession>F6KJX4</accession>
<accession>F6KKG6</accession>
<accession>F6R5Z7</accession>
<accession>F6RBV2</accession>
<accession>F6U3Q6</accession>
<accession>F6UPC9</accession>
<accession>F6VPR3</accession>
<accession>F6WUN7</accession>
<accession>F6X715</accession>
<accession>F6XPA1</accession>
<accession>F6Y0A5</accession>
<accession>F6YP25</accession>
<accession>F6YZQ9</accession>
<accession>F7ASH0</accession>
<accession>F7CIN1</accession>
<accession>F7D5J8</accession>
<accession>F7DFU0</accession>
<accession>F8VQ61</accession>
<accession>H3BKS0</accession>
<accession>Q0ZM15</accession>
<accession>Q0ZM16</accession>
<accession>Q0ZM18</accession>
<accession>Q0ZM19</accession>
<accession>Q0ZM20</accession>
<accession>Q0ZM21</accession>
<accession>Q0ZM22</accession>
<accession>Q0ZM23</accession>
<accession>Q0ZM24</accession>
<accession>Q0ZM25</accession>
<accession>Q0ZM26</accession>
<accession>Q0ZM27</accession>
<accession>Q0ZM28</accession>
<accession>Q0ZM29</accession>
<accession>Q0ZM30</accession>
<accession>Q0ZM31</accession>
<accession>Q0ZM32</accession>
<accession>Q0ZM33</accession>
<accession>Q0ZM34</accession>
<accession>Q0ZM35</accession>
<accession>Q0ZM37</accession>
<accession>Q2VQG7</accession>
<accession>Q3URZ1</accession>
<accession>Q3UTS7</accession>
<comment type="function">
    <text>Calcium-dependent cell-adhesion protein. Required for inner ear neuroepithelial cell elaboration and cochlear function. Probably involved in the maintenance of normal retinal function.</text>
</comment>
<comment type="subunit">
    <text evidence="6 9 10 11 12 13 14 15 16">Antiparallel heterodimer with CDH23 (PubMed:17805295, PubMed:23135401). Found in a complex with TMIE and LHFPL5 (PubMed:25467981). Interacts with LHFPL5/TMHS; this interaction is required for efficient localization to hair bundles (PubMed:23217710). Interacts with MYO7A (PubMed:16481439). Interacts with USH1G; this interaction may recruit USH1G to the plasma membrane (PubMed:21436032). Interacts with TOMT (PubMed:28504928). Isoforms CD1 and CD3 interact with TMC1 (via N-terminus) and TMC2 (via N-terminus) (PubMed:25114259). Interacts with PIEZO1 (PubMed:38228630).</text>
</comment>
<comment type="interaction">
    <interactant intactId="EBI-6556746">
        <id>Q99PJ1</id>
    </interactant>
    <interactant intactId="EBI-15656347">
        <id>Q99PF4-1</id>
        <label>Cdh23</label>
    </interactant>
    <organismsDiffer>false</organismsDiffer>
    <experiments>10</experiments>
</comment>
<comment type="interaction">
    <interactant intactId="EBI-6556746">
        <id>Q99PJ1</id>
    </interactant>
    <interactant intactId="EBI-7418968">
        <id>Q9ES64</id>
        <label>Ush1c</label>
    </interactant>
    <organismsDiffer>false</organismsDiffer>
    <experiments>3</experiments>
</comment>
<comment type="interaction">
    <interactant intactId="EBI-6556746">
        <id>Q99PJ1</id>
    </interactant>
    <interactant intactId="EBI-7418919">
        <id>Q9ES64-3</id>
        <label>Ush1c</label>
    </interactant>
    <organismsDiffer>false</organismsDiffer>
    <experiments>2</experiments>
</comment>
<comment type="subcellular location">
    <subcellularLocation>
        <location evidence="10 12">Cell membrane</location>
        <topology evidence="10 12">Single-pass membrane protein</topology>
    </subcellularLocation>
    <text>Efficient localization to the plasma membrane requires the presence of LHFPL5.</text>
</comment>
<comment type="subcellular location">
    <molecule>Isoform 1</molecule>
    <subcellularLocation>
        <location evidence="1">Cell membrane</location>
        <topology evidence="1">Single-pass type I membrane protein</topology>
    </subcellularLocation>
</comment>
<comment type="subcellular location">
    <molecule>Isoform 2</molecule>
    <subcellularLocation>
        <location evidence="1">Cell membrane</location>
        <topology evidence="1">Single-pass type I membrane protein</topology>
    </subcellularLocation>
</comment>
<comment type="subcellular location">
    <molecule>Isoform 3</molecule>
    <subcellularLocation>
        <location evidence="21">Secreted</location>
    </subcellularLocation>
</comment>
<comment type="subcellular location">
    <molecule>Isoform 4</molecule>
    <subcellularLocation>
        <location evidence="1">Cell membrane</location>
        <topology evidence="1">Single-pass type I membrane protein</topology>
    </subcellularLocation>
</comment>
<comment type="subcellular location">
    <molecule>Isoform 5</molecule>
    <subcellularLocation>
        <location evidence="1">Cell membrane</location>
        <topology evidence="1">Single-pass type I membrane protein</topology>
    </subcellularLocation>
</comment>
<comment type="subcellular location">
    <molecule>Isoform 6</molecule>
    <subcellularLocation>
        <location evidence="1">Cell membrane</location>
        <topology evidence="1">Single-pass type I membrane protein</topology>
    </subcellularLocation>
</comment>
<comment type="subcellular location">
    <molecule>Isoform 7</molecule>
    <subcellularLocation>
        <location evidence="1">Cell membrane</location>
        <topology evidence="1">Single-pass type I membrane protein</topology>
    </subcellularLocation>
</comment>
<comment type="subcellular location">
    <molecule>Isoform 8</molecule>
    <subcellularLocation>
        <location evidence="1">Cell membrane</location>
        <topology evidence="1">Single-pass type I membrane protein</topology>
    </subcellularLocation>
</comment>
<comment type="subcellular location">
    <molecule>Isoform 9</molecule>
    <subcellularLocation>
        <location evidence="1">Cell membrane</location>
        <topology evidence="1">Single-pass type I membrane protein</topology>
    </subcellularLocation>
</comment>
<comment type="subcellular location">
    <molecule>Isoform 10</molecule>
    <subcellularLocation>
        <location evidence="1">Cell membrane</location>
        <topology evidence="1">Single-pass type I membrane protein</topology>
    </subcellularLocation>
</comment>
<comment type="subcellular location">
    <molecule>Isoform 11</molecule>
    <subcellularLocation>
        <location evidence="1">Cell membrane</location>
        <topology evidence="1">Single-pass type I membrane protein</topology>
    </subcellularLocation>
</comment>
<comment type="subcellular location">
    <molecule>Isoform 12</molecule>
    <subcellularLocation>
        <location evidence="1">Cell membrane</location>
        <topology evidence="1">Single-pass type I membrane protein</topology>
    </subcellularLocation>
</comment>
<comment type="subcellular location">
    <molecule>Isoform 13</molecule>
    <subcellularLocation>
        <location evidence="21">Secreted</location>
    </subcellularLocation>
</comment>
<comment type="subcellular location">
    <molecule>Isoform 14</molecule>
    <subcellularLocation>
        <location evidence="21">Secreted</location>
    </subcellularLocation>
</comment>
<comment type="subcellular location">
    <molecule>Isoform 15</molecule>
    <subcellularLocation>
        <location evidence="21">Secreted</location>
    </subcellularLocation>
</comment>
<comment type="subcellular location">
    <molecule>Isoform 16</molecule>
    <subcellularLocation>
        <location evidence="21">Secreted</location>
    </subcellularLocation>
</comment>
<comment type="subcellular location">
    <molecule>Isoform 17</molecule>
    <subcellularLocation>
        <location evidence="21">Secreted</location>
    </subcellularLocation>
</comment>
<comment type="subcellular location">
    <molecule>Isoform 18</molecule>
    <subcellularLocation>
        <location evidence="1">Cell membrane</location>
        <topology evidence="1">Single-pass type I membrane protein</topology>
    </subcellularLocation>
</comment>
<comment type="subcellular location">
    <molecule>Isoform 19</molecule>
    <subcellularLocation>
        <location evidence="1">Cell membrane</location>
        <topology evidence="1">Single-pass type I membrane protein</topology>
    </subcellularLocation>
</comment>
<comment type="subcellular location">
    <molecule>Isoform 21</molecule>
    <subcellularLocation>
        <location evidence="21">Secreted</location>
    </subcellularLocation>
</comment>
<comment type="subcellular location">
    <molecule>Isoform 22</molecule>
    <subcellularLocation>
        <location evidence="21">Secreted</location>
    </subcellularLocation>
</comment>
<comment type="subcellular location">
    <molecule>Isoform 23</molecule>
    <subcellularLocation>
        <location evidence="21">Secreted</location>
    </subcellularLocation>
</comment>
<comment type="alternative products">
    <event type="alternative splicing"/>
    <isoform>
        <id>Q99PJ1-1</id>
        <name>1</name>
        <name>CD1-1</name>
        <sequence type="displayed"/>
    </isoform>
    <isoform>
        <id>Q99PJ1-2</id>
        <name>2</name>
        <name>CD1-2</name>
        <sequence type="described" ref="VSP_046580"/>
    </isoform>
    <isoform>
        <id>Q99PJ1-3</id>
        <name>3</name>
        <name>CD1-3/5</name>
        <sequence type="described" ref="VSP_046580 VSP_046592 VSP_046594"/>
    </isoform>
    <isoform>
        <id>Q99PJ1-4</id>
        <name>4</name>
        <name>CD1-4</name>
        <sequence type="described" ref="VSP_046580 VSP_046602"/>
    </isoform>
    <isoform>
        <id>Q99PJ1-5</id>
        <name>5</name>
        <name>CD1-6</name>
        <sequence type="described" ref="VSP_046580 VSP_046591"/>
    </isoform>
    <isoform>
        <id>Q99PJ1-6</id>
        <name>6</name>
        <name>CD1-7</name>
        <sequence type="described" ref="VSP_046580 VSP_046601 VSP_046602"/>
    </isoform>
    <isoform>
        <id>Q99PJ1-7</id>
        <name>7</name>
        <name>CD1-8</name>
        <sequence type="described" ref="VSP_046580 VSP_046581 VSP_046601 VSP_046602"/>
    </isoform>
    <isoform>
        <id>Q99PJ1-8</id>
        <name>8</name>
        <name>CD1-9</name>
        <sequence type="described" ref="VSP_046579"/>
    </isoform>
    <isoform>
        <id>Q99PJ1-9</id>
        <name>9</name>
        <name>CD1-10</name>
        <sequence type="described" ref="VSP_046579 VSP_046601"/>
    </isoform>
    <isoform>
        <id>Q99PJ1-10</id>
        <name>10</name>
        <name>CD2-1</name>
        <sequence type="described" ref="VSP_046588 VSP_046605"/>
    </isoform>
    <isoform>
        <id>Q99PJ1-11</id>
        <name>11</name>
        <name>CD2-2</name>
        <sequence type="described" ref="VSP_046580 VSP_046607 VSP_046609"/>
    </isoform>
    <isoform>
        <id>Q99PJ1-12</id>
        <name>12</name>
        <name>CD2-3</name>
        <sequence type="described" ref="VSP_046577 VSP_046588 VSP_046607 VSP_046609"/>
    </isoform>
    <isoform>
        <id>Q99PJ1-13</id>
        <name>13</name>
        <name>CD2-4</name>
        <sequence type="described" ref="VSP_046580 VSP_046582 VSP_046583"/>
    </isoform>
    <isoform>
        <id>Q99PJ1-14</id>
        <name>14</name>
        <name>CD2-5</name>
        <sequence type="described" ref="VSP_046580 VSP_046584 VSP_046585"/>
    </isoform>
    <isoform>
        <id>Q99PJ1-15</id>
        <name>15</name>
        <name>CD2-6</name>
        <sequence type="described" ref="VSP_046580 VSP_046587 VSP_046593"/>
    </isoform>
    <isoform>
        <id>Q99PJ1-16</id>
        <name>16</name>
        <name>CD2-7</name>
        <sequence type="described" ref="VSP_046580 VSP_046590 VSP_046596"/>
    </isoform>
    <isoform>
        <id>Q99PJ1-17</id>
        <name>17</name>
        <name>CD2-8</name>
        <sequence type="described" ref="VSP_046580 VSP_046595 VSP_046597"/>
    </isoform>
    <isoform>
        <id>Q99PJ1-18</id>
        <name>18</name>
        <name>CD3-1</name>
        <sequence type="described" ref="VSP_046606 VSP_046611"/>
    </isoform>
    <isoform>
        <id>Q99PJ1-19</id>
        <name>19</name>
        <name>CD3-2</name>
        <sequence type="described" ref="VSP_046580 VSP_046606 VSP_046611"/>
    </isoform>
    <isoform>
        <id>Q99PJ1-20</id>
        <name>20</name>
        <name>CD3-3</name>
        <sequence type="described" ref="VSP_046576 VSP_046600 VSP_046610"/>
    </isoform>
    <isoform>
        <id>Q99PJ1-21</id>
        <name>21</name>
        <name>SI-1</name>
        <sequence type="described" ref="VSP_046598 VSP_046599"/>
    </isoform>
    <isoform>
        <id>Q99PJ1-22</id>
        <name>22</name>
        <name>SI-2</name>
        <sequence type="described" ref="VSP_046580 VSP_046598 VSP_046599"/>
    </isoform>
    <isoform>
        <id>Q99PJ1-23</id>
        <name>23</name>
        <name>SI-3</name>
        <sequence type="described" ref="VSP_046580 VSP_046589 VSP_046598 VSP_046599"/>
    </isoform>
    <isoform>
        <id>Q99PJ1-24</id>
        <name>24</name>
        <name>C</name>
        <sequence type="described" ref="VSP_046578 VSP_046608"/>
    </isoform>
    <isoform>
        <id>Q99PJ1-25</id>
        <name>25</name>
        <sequence type="described" ref="VSP_046603"/>
    </isoform>
    <isoform>
        <id>Q99PJ1-26</id>
        <name>26</name>
        <sequence type="described" ref="VSP_046601 VSP_046604"/>
    </isoform>
</comment>
<comment type="tissue specificity">
    <text evidence="5 6 7 9">Expressed in brain and sensory epithelium of the developing inner ear. Expressed in the retina, in the photoreceptor inner segments, the outer plexiform layer, the inner nuclei layer and the ganglion cell layer and, more diffusely in the inner plexiform layer (at protein level). Not detected in the retinal pigment epithelium (at protein level). Expressed in the spleen, dorsal root ganglion, dorsal aspect of neural tube, floor plate and ependymal cells adjacent to the neural canal.</text>
</comment>
<comment type="developmental stage">
    <text evidence="8">Highest level of expression is detected at embryonic day 16. Alternative splicing isoforms have different spatiotemporal expression patterns. In cochlear cultures at the equivalent of postnatal day 3, isoforms belonging to the CD1 (isoforms 1 through 9) and CD3 (isoforms 18 through 20) groups are highly expressed in hair bundles in the basal coils and moderately in those in the middle of the apical coil; they are hardly detectable in those at the apical end of the apical coil (at protein level). At the base of the cultured cochlea, in the more mature hair bundles, CD3 group isoforms are restricted to the tips of the shorter stereocilia in both inner and outer hair cells. By contrast, at the same stage, isoforms belonging to the CD2 group (isoforms 10 through 17) are highly expressed in hair bundles in the apex of the cochlea and, at lower levels, in those in the middle of the apical coil; they are hardly detectable at the base of the cochlea (at protein level). In mature hair bundles, CD1 group isoforms are distributed fairly evenly along most of the length of the stereocilia on auditory hair cells, whereas they are concentrated toward the upper third of the hair bundle in vestibular hair cells. In both the auditory and the vestibular organs, these isoforms are excluded from a region at the very tip of each stereocilium (at protein level). In contrast, CD2 group isoforms are undetectable in adult cochlear hair cells (at protein level). These isoforms are expressed in the entire hair bundle of the immature cells in the sensory epithelium of the early postnatal vestibule and only in the kinocilium in the more mature hair bundles (at protein level). CD3 group isoforms are detected in immature vestibular hair bundles, concentrated toward the tip of each stereocilium, as early as 15.5 dpc. They also localize to the tips of the shorter stereocilia in the mature vestibular hair bundles and are not detected at the tips of the stereocilia in the tallest row (at protein level).</text>
</comment>
<comment type="domain">
    <text evidence="11">Cadherin repeats 1 and 2 mediate calcium-dependent heterophilic interaction with CDH23.</text>
</comment>
<comment type="domain">
    <text evidence="11">Three calcium ions are usually bound at the interface of each cadherin domain and rigidify the connections, imparting a strong curvature to the full-length ectodomain.</text>
</comment>
<comment type="disease">
    <text>Defects in Pcdh15 are the cause of the Ames waltzer (av) phenotype. It is characterized by deafness and a balance disorder, associated with the degeneration of inner ear neuroepithelia.</text>
</comment>
<comment type="miscellaneous">
    <molecule>Isoform 3</molecule>
    <text evidence="21">May be produced at very low levels due to a premature stop codon in the mRNA, leading to nonsense-mediated mRNA decay.</text>
</comment>
<comment type="miscellaneous">
    <molecule>Isoform 13</molecule>
    <text evidence="21">May be produced at very low levels due to a premature stop codon in the mRNA, leading to nonsense-mediated mRNA decay.</text>
</comment>
<comment type="miscellaneous">
    <molecule>Isoform 24</molecule>
    <text evidence="21">Produced by aberrant splicing sites.</text>
</comment>
<comment type="sequence caution" evidence="21">
    <conflict type="erroneous initiation">
        <sequence resource="EMBL-CDS" id="ABC79270"/>
    </conflict>
    <text>Extended N-terminus.</text>
</comment>
<protein>
    <recommendedName>
        <fullName>Protocadherin-15</fullName>
    </recommendedName>
</protein>
<feature type="signal peptide" evidence="2">
    <location>
        <begin position="1"/>
        <end position="26"/>
    </location>
</feature>
<feature type="chain" id="PRO_0000003999" description="Protocadherin-15">
    <location>
        <begin position="27"/>
        <end position="1943"/>
    </location>
</feature>
<feature type="topological domain" description="Extracellular" evidence="2">
    <location>
        <begin position="27"/>
        <end position="1381"/>
    </location>
</feature>
<feature type="transmembrane region" description="Helical" evidence="2">
    <location>
        <begin position="1382"/>
        <end position="1402"/>
    </location>
</feature>
<feature type="topological domain" description="Cytoplasmic" evidence="2">
    <location>
        <begin position="1403"/>
        <end position="1943"/>
    </location>
</feature>
<feature type="domain" description="Cadherin 1" evidence="3">
    <location>
        <begin position="45"/>
        <end position="152"/>
    </location>
</feature>
<feature type="domain" description="Cadherin 2" evidence="3">
    <location>
        <begin position="153"/>
        <end position="270"/>
    </location>
</feature>
<feature type="domain" description="Cadherin 3" evidence="3">
    <location>
        <begin position="283"/>
        <end position="400"/>
    </location>
</feature>
<feature type="domain" description="Cadherin 4" evidence="3">
    <location>
        <begin position="401"/>
        <end position="514"/>
    </location>
</feature>
<feature type="domain" description="Cadherin 5" evidence="3">
    <location>
        <begin position="515"/>
        <end position="621"/>
    </location>
</feature>
<feature type="domain" description="Cadherin 6" evidence="3">
    <location>
        <begin position="622"/>
        <end position="722"/>
    </location>
</feature>
<feature type="domain" description="Cadherin 7" evidence="3">
    <location>
        <begin position="724"/>
        <end position="824"/>
    </location>
</feature>
<feature type="domain" description="Cadherin 8" evidence="3">
    <location>
        <begin position="825"/>
        <end position="931"/>
    </location>
</feature>
<feature type="domain" description="Cadherin 9" evidence="3">
    <location>
        <begin position="932"/>
        <end position="1040"/>
    </location>
</feature>
<feature type="domain" description="Cadherin 10" evidence="3">
    <location>
        <begin position="1042"/>
        <end position="1149"/>
    </location>
</feature>
<feature type="domain" description="Cadherin 11" evidence="3">
    <location>
        <begin position="1150"/>
        <end position="1264"/>
    </location>
</feature>
<feature type="region of interest" description="Disordered" evidence="4">
    <location>
        <begin position="1425"/>
        <end position="1453"/>
    </location>
</feature>
<feature type="region of interest" description="Disordered" evidence="4">
    <location>
        <begin position="1475"/>
        <end position="1533"/>
    </location>
</feature>
<feature type="region of interest" description="Disordered" evidence="4">
    <location>
        <begin position="1714"/>
        <end position="1865"/>
    </location>
</feature>
<feature type="compositionally biased region" description="Pro residues" evidence="4">
    <location>
        <begin position="1431"/>
        <end position="1449"/>
    </location>
</feature>
<feature type="compositionally biased region" description="Basic and acidic residues" evidence="4">
    <location>
        <begin position="1480"/>
        <end position="1489"/>
    </location>
</feature>
<feature type="compositionally biased region" description="Basic and acidic residues" evidence="4">
    <location>
        <begin position="1498"/>
        <end position="1509"/>
    </location>
</feature>
<feature type="compositionally biased region" description="Pro residues" evidence="4">
    <location>
        <begin position="1742"/>
        <end position="1760"/>
    </location>
</feature>
<feature type="compositionally biased region" description="Pro residues" evidence="4">
    <location>
        <begin position="1769"/>
        <end position="1779"/>
    </location>
</feature>
<feature type="compositionally biased region" description="Low complexity" evidence="4">
    <location>
        <begin position="1784"/>
        <end position="1795"/>
    </location>
</feature>
<feature type="compositionally biased region" description="Pro residues" evidence="4">
    <location>
        <begin position="1796"/>
        <end position="1821"/>
    </location>
</feature>
<feature type="compositionally biased region" description="Low complexity" evidence="4">
    <location>
        <begin position="1822"/>
        <end position="1834"/>
    </location>
</feature>
<feature type="compositionally biased region" description="Polar residues" evidence="4">
    <location>
        <begin position="1846"/>
        <end position="1858"/>
    </location>
</feature>
<feature type="glycosylation site" description="N-linked (GlcNAc...) asparagine" evidence="2">
    <location>
        <position position="57"/>
    </location>
</feature>
<feature type="glycosylation site" description="N-linked (GlcNAc...) asparagine" evidence="2">
    <location>
        <position position="102"/>
    </location>
</feature>
<feature type="glycosylation site" description="N-linked (GlcNAc...) asparagine" evidence="2">
    <location>
        <position position="206"/>
    </location>
</feature>
<feature type="glycosylation site" description="N-linked (GlcNAc...) asparagine" evidence="2">
    <location>
        <position position="424"/>
    </location>
</feature>
<feature type="glycosylation site" description="N-linked (GlcNAc...) asparagine" evidence="2">
    <location>
        <position position="564"/>
    </location>
</feature>
<feature type="glycosylation site" description="N-linked (GlcNAc...) asparagine" evidence="2">
    <location>
        <position position="667"/>
    </location>
</feature>
<feature type="glycosylation site" description="N-linked (GlcNAc...) asparagine" evidence="2">
    <location>
        <position position="729"/>
    </location>
</feature>
<feature type="glycosylation site" description="N-linked (GlcNAc...) asparagine" evidence="2">
    <location>
        <position position="773"/>
    </location>
</feature>
<feature type="glycosylation site" description="N-linked (GlcNAc...) asparagine" evidence="2">
    <location>
        <position position="826"/>
    </location>
</feature>
<feature type="glycosylation site" description="N-linked (GlcNAc...) asparagine" evidence="2">
    <location>
        <position position="856"/>
    </location>
</feature>
<feature type="glycosylation site" description="N-linked (GlcNAc...) asparagine" evidence="2">
    <location>
        <position position="1069"/>
    </location>
</feature>
<feature type="glycosylation site" description="N-linked (GlcNAc...) asparagine" evidence="2">
    <location>
        <position position="1089"/>
    </location>
</feature>
<feature type="glycosylation site" description="N-linked (GlcNAc...) asparagine" evidence="2">
    <location>
        <position position="1180"/>
    </location>
</feature>
<feature type="disulfide bond" evidence="11">
    <location>
        <begin position="37"/>
        <end position="125"/>
    </location>
</feature>
<feature type="splice variant" id="VSP_046576" description="In isoform 20." evidence="19">
    <location>
        <begin position="1"/>
        <end position="1252"/>
    </location>
</feature>
<feature type="splice variant" id="VSP_046577" description="In isoform 12." evidence="19">
    <location>
        <begin position="1"/>
        <end position="401"/>
    </location>
</feature>
<feature type="splice variant" id="VSP_046578" description="In isoform 24." evidence="18">
    <location>
        <begin position="31"/>
        <end position="600"/>
    </location>
</feature>
<feature type="splice variant" id="VSP_046579" description="In isoform 8 and isoform 9." evidence="19">
    <location>
        <begin position="31"/>
        <end position="57"/>
    </location>
</feature>
<feature type="splice variant" id="VSP_046580" description="In isoform 2, isoform 3, isoform 4, isoform 5, isoform 6, isoform 7, isoform 11, isoform 13, isoform 14, isoform 15, isoform 16, isoform 17, isoform 19, isoform 22 and isoform 23." evidence="19">
    <location>
        <begin position="31"/>
        <end position="35"/>
    </location>
</feature>
<feature type="splice variant" id="VSP_046581" description="In isoform 7." evidence="19">
    <location>
        <begin position="204"/>
        <end position="240"/>
    </location>
</feature>
<feature type="splice variant" id="VSP_046582" description="In isoform 13." evidence="19">
    <original>EELNPILVTPPIQAIDQDRNIQPPSDRPGILYSI</original>
    <variation>DFGSLRSGANSWCQGCGGVHRCPSPWRRLLPRRL</variation>
    <location>
        <begin position="298"/>
        <end position="331"/>
    </location>
</feature>
<feature type="splice variant" id="VSP_046583" description="In isoform 13." evidence="19">
    <location>
        <begin position="332"/>
        <end position="1943"/>
    </location>
</feature>
<feature type="splice variant" id="VSP_046584" description="In isoform 14." evidence="19">
    <original>TPEDY</original>
    <variation>RARES</variation>
    <location>
        <begin position="335"/>
        <end position="339"/>
    </location>
</feature>
<feature type="splice variant" id="VSP_046585" description="In isoform 14." evidence="19">
    <location>
        <begin position="340"/>
        <end position="1943"/>
    </location>
</feature>
<feature type="splice variant" id="VSP_046587" description="In isoform 15." evidence="19">
    <original>AEQDNGHPLPAFASLHIEILDENNQSPYFTMPSYQGYILESAPVGATISESLNLTTPLRIVALDKDIEDTKDPELHLFLNDYTSVFTVTPTGITRYLTLLQPVDREEQQTYTFLITAFDGVQESEPVVVNIRVMDANDNTPTFPEISYDVYVYTDMSPGDSVIQLTAVDADEGSNGEISYEILVGGKGDFVINKTTGLVSIAPGVELIVGQTYALTVQASDNAPPAERRHSICTVYIEVLPPNNQSPPRFPQLMYSLEVSEAMRIGAILLNLQATDREGDPITY</original>
    <variation>VEPEKVKKPKVEIREPSEEEVVVTVEKPPAAEPTYPTWKRARIFPMIFKKVRGLAEKRGIDLEGEEWRRRLDEEDKDYLQLTLDQEEATESTVESEEESSDYTEYTETESEFSESETTEESESETPSEEAEESSTPESEESESTESEGEKARKNIVLARRRPVVEEIQEVKGKREEPPVEEEEEPPLEEEERAEEGEESEAAPMDESTDLEAQDVPEEGSAESVSMERGVESEESESELSSSSSTSESLSGGPWGFQVPEYDRRKDEEPKKSPGANSEGYNTAL</variation>
    <location>
        <begin position="372"/>
        <end position="655"/>
    </location>
</feature>
<feature type="splice variant" id="VSP_046588" description="In isoform 10 and isoform 12." evidence="19">
    <original>D</original>
    <variation>DVPPGGVP</variation>
    <location>
        <position position="440"/>
    </location>
</feature>
<feature type="splice variant" id="VSP_046589" description="In isoform 23." evidence="19">
    <location>
        <begin position="441"/>
        <end position="961"/>
    </location>
</feature>
<feature type="splice variant" id="VSP_046590" description="In isoform 16." evidence="19">
    <original>TKDPELHLFLNDYTSVFTVTPTGITRYLTLLQPVDREEQQTYTFLITAFDGVQESEPVVVNIRVMDANDNTPTFPEISYDVYVYTDMSPGDSVIQLTAVDADEGSNGEISYEILVGGKGDFVINKTTGLVSIAPGVELIVGQTYALTVQASDNAPPAERRHSICTVYIEVLPPNNQSPPRFPQLMYSLEVSEAMRIGAILLNLQATDREGDPITYAIENGDPQRVFNLSETTGILSLGKALDRESTDRYILIVTASDGRPDGTSTATVNIVVTDVNDNAPVFDPY</original>
    <variation>VEPEKVKKPKVEIREPSEEEVVVTVEKPPAAEPTYPTWKRARIFPMIFKKVRGLAEKRGIDLEGEEWRRRLDEEDKDYLQLTLDQEEATESTVESEEESSDYTEYTETESEFSESETTEESESETPSEEAEESSTPESEESESTESEGEKARKNIVLARRRPVVEEIQEVKGKREEPPVEEEEEPPLEEEERAEEGEESEAAPMDESTDLEAQDVPEEGSAESVSMERGVESEESESELSSSSSTSESLSGGPWGFQVPEYDRRKDEEPKKSPGANSEGYNTAL</variation>
    <location>
        <begin position="441"/>
        <end position="725"/>
    </location>
</feature>
<feature type="splice variant" id="VSP_046591" description="In isoform 5." evidence="19">
    <original>RHSICTVYIEVLPPNNQSPPRFPQLMYSLEVSEAMRIGAILLNLQATDREGDPITYAIENGDPQRVFNLSET</original>
    <variation>S</variation>
    <location>
        <begin position="600"/>
        <end position="671"/>
    </location>
</feature>
<feature type="splice variant" id="VSP_046592" description="In isoform 3." evidence="19">
    <original>ATDREGDPITYAIENGDPQRVFNLSETTGILSLGKALDRESTDRY</original>
    <variation>HRDSQPREGSRPREHRPLHPHRHSLRWQTGWNLNCHCEHSGDGRQ</variation>
    <location>
        <begin position="645"/>
        <end position="689"/>
    </location>
</feature>
<feature type="splice variant" id="VSP_046593" description="In isoform 15." evidence="19">
    <location>
        <begin position="656"/>
        <end position="1943"/>
    </location>
</feature>
<feature type="splice variant" id="VSP_046594" description="In isoform 3." evidence="19">
    <location>
        <begin position="690"/>
        <end position="1943"/>
    </location>
</feature>
<feature type="splice variant" id="VSP_046595" description="In isoform 17." evidence="19">
    <original>TSTATVNIVVTDVNDNAPVFDPYLPRNLSVVEEEANAFVGQVRATDPDAGINGQVHYSLGNFNNLFRITSNGSIYTAVKLNREARDHYELVVVATDGAVHPRHSTLTLYIKVLDIDDNSPVFTNSTYTVVVEENLPAGTSFLQIEAKDVDLGANVSYRIRSPEVKHLFALHPFTGELSLLRSLDYEAFPDQEASITFLVEAFDIYGTMPPGIATVTVIVKDMNDYPPVFSKRIYKGMVAPDAVKGTPITTVYAEDADPPGMPASRVRYRVDDVQFPYPASIFDV</original>
    <variation>VEPEKVKKPKVEIREPSEEEVVVTVEKPPAAEPTYPTWKRARIFPMIFKKVRGLAEKRGIDLEGEEWRRRLDEEDKDYLQLTLDQEEATESTVESEEESSDYTEYTETESEFSESETTEESESETPSEEAEESSTPESEESESTESEGEKARKNIVLARRRPVVEEIQEVKGKREEPPVEEEEEPPLEEEERAEEGEESEAAPMDESTDLEAQDVPEEGSAESVSMERGVESEESESELSSSSSTSESLSGGPWGFQVPEYDRRKDEEPKKSPGANSEGYNTAL</variation>
    <location>
        <begin position="703"/>
        <end position="986"/>
    </location>
</feature>
<feature type="splice variant" id="VSP_046596" description="In isoform 16." evidence="19">
    <location>
        <begin position="726"/>
        <end position="1943"/>
    </location>
</feature>
<feature type="splice variant" id="VSP_046597" description="In isoform 17." evidence="19">
    <location>
        <begin position="987"/>
        <end position="1943"/>
    </location>
</feature>
<feature type="splice variant" id="VSP_046598" description="In isoform 21, isoform 22 and isoform 23." evidence="17 19">
    <original>NTAKVYIEIQDENDHPPVFQKKFYIGGVSEDARMFASVLRVKATDR</original>
    <variation>LSVIPCSWRTQVSKSLGLELGVPVSHSVESGTRTGSSTRAASVPIH</variation>
    <location>
        <begin position="1131"/>
        <end position="1176"/>
    </location>
</feature>
<feature type="splice variant" id="VSP_046599" description="In isoform 21, isoform 22 and isoform 23." evidence="17 19">
    <location>
        <begin position="1177"/>
        <end position="1943"/>
    </location>
</feature>
<feature type="splice variant" id="VSP_046600" description="In isoform 20." evidence="19">
    <original>FKVRQAECTKTARIQSAMPAAKPAAPVPAAPAPPPPPPPPPPGAHLYEELGESAMHNLFLLYHFEQSRGNNSVPEDRSSHRDGMAFSSSTTESHEPAHVEGPLKESQPNPARTFSFVPDEDNLSTHNPLYMESIGQRSTNSDLQPRTDFEELLAPRTQVKSQSLRGPREKIQRVWNQSVSFPRRLMWKAPNRPETIDLVEWQITNQRAECESARCHPSQRGSSNVLLATEDAHESEKEGGHRDTLIVQQTEQLKSLSSGSS</original>
    <variation>GGFAPEHQLLRPSLLKPEELSMESGIDPGQEYGQDYYSYEHGYEMPQYGSRRRLLPPAGQEEYGEVIGEAEEEYEEEEWARKRMIKLVVDREYESSSPGEDSAPESQRSRTHKPSGRSNVNGNIYIAQNGSVVRTRRACVADNLKVPSPGLLGRHLKKLDTLAGTREENVPLNTLFKGPFSTEKAKRTPTLVTFAPCPVVAEHSAVKPSGTRLKHTAEQESMVDSRLSRESMEFHGDSAPSDEEELWMGPWNSLHIPMTKL</variation>
    <location>
        <begin position="1407"/>
        <end position="1667"/>
    </location>
</feature>
<feature type="splice variant" id="VSP_046601" description="In isoform 6, isoform 7, isoform 9 and isoform 26." evidence="19 20">
    <location>
        <begin position="1407"/>
        <end position="1409"/>
    </location>
</feature>
<feature type="splice variant" id="VSP_046602" description="In isoform 4, isoform 6 and isoform 7." evidence="19">
    <original>MHN</original>
    <variation>I</variation>
    <location>
        <begin position="1461"/>
        <end position="1463"/>
    </location>
</feature>
<feature type="splice variant" id="VSP_046603" description="In isoform 25." evidence="20">
    <original>HNLFLLYHFEQSRGNNSVPEDRSSHRDGMAFSSSTTESHEPAHVEGPLKESQPNPARTFSFVPDEDNLSTHNPLYMESIGQRSTNSDLQPRTDFEELLAPRTQVKSQSLRGPREKIQRVWNQSVSFPRRLMWKAPNRPETIDLVEWQITNQRAECESARCHPSQRGSSNVLLATEDAHESEKEGGHRDTLIVQQTEQLKSLSSGSSFSSSWSHFSFSTLPTISRAVELGSEPNVVTSPADCTLELSPPLRPRILNSLSSKRETPTCASDTEPKRNSFEIAPHPPSISAPLPHPPLPRPPIAFTTFPLPLSPPNPPPPQLVTFSLPISTPPTSSLPLPPPLSLPPPPRPPAPRLFPQPPSTSIPSTDSISAPAAKCTASATHARETTSTTQPPASNPQWGAEPHRHPKGILRHVKNLAELEKSVSNMYSHIEKNCPPADPSKLHTFCPAEKTGMKITHDQSQETLVRVVEGIDVQPHSQSTSL</original>
    <variation>YEMPQYGSRRRLLPPAGQEEYGEVIGEAEEEYEEEEVEPEKVKKPKVEIREPSEEEVVVTVEKPPAAEPTYPTWKRARIFPMIFKKVRGLAEKRGIDLEGEEWRRRLDEEDKDYLQLTLDQEEATESTVESEEESSDYTEYTETESEFSESETTEESESETPSEEAEESSTPESEESESTESEGEKARKNIVLARRRPVVEEIQEVKGKREEPPVEEEEEPPLEEEERAEEGEESEAAPMDESTDLEAQDVPEEGSAESVSMERGVESEESESELSSSSSTSESLSGGPWGFQVPEYDRRKDEEPKKSPGANSEGYNTAL</variation>
    <location>
        <begin position="1462"/>
        <end position="1943"/>
    </location>
</feature>
<feature type="splice variant" id="VSP_046604" description="In isoform 26." evidence="20">
    <original>HNLFLLYHFEQSRGNNSVPEDRSSHRDGMAFSSSTTESHEPAHVEGPLKESQPNPARTFSFVPDEDNLSTHNPLYMESIGQRSTNSDLQPRTDFEELLAPRTQVKSQSLRGPREKIQRVWNQSVSFPRRLMWKAPNRPETIDLVEWQITNQRAECESARCHPSQRGSSNVLLATEDAHESEKEGGHRDTLIVQQTEQLKSLSSGSSFSSSWSHFSFSTLPTISRAVELGSEPNVVTSPADCTLELSPPLRPRILNSLSSKRETPTCASDTEPKRNSFEIAPHPPSISAPLPHPPLPRPPIAFTTFPLPLSPPNPPPPQLVTFSLPISTPPTSSLPLPPPLSLPPPPRPPAPRLFPQPPSTSIPSTDSISAPAAKCTASATHARETTSTTQPPASNPQWGAEPHRHPKGILRHVKNLAELEKSVSNMYSHIEKNCPPADPSKLHTFCPAEKTGMKITHDQSQETLVRVVEGIDVQPHSQSTSL</original>
    <variation>YEMPQYGSRRRLLPPAGQEEYGEVIGEAEEEYEEEEWARKRMIKLVVDREYESSSPGEDSAPESQRSRTHKPSGRSNVNGNIYIAQNGSVVRTRRACVADNLKVPSPGLLGRHLKKLDTLAGTREENVPLNTLFKGPFSTEKAKRTPTLVTFAPCPVVAEHSAVKPSGTRLKHTAEQESMVDSRLSRESMEFHGDSAPSDEEELWMGPWNSLHIPMTKL</variation>
    <location>
        <begin position="1462"/>
        <end position="1943"/>
    </location>
</feature>
<feature type="splice variant" id="VSP_046605" description="In isoform 10." evidence="19">
    <original>NLFLLYHFEQSRGNNSVPEDRSSHRDGMAFSSSTTESHEPAHVEGPLKESQPNPARTFSFVPDEDNLSTHNPLYMESIGQRSTNSDLQPRTDFEELLAPRTQVKSQSLRGPREKIQRVWNQSVSFPRRLMWKAPNRPETIDLVEWQITNQRAECESARCHPSQRGSSNVLLATEDAHESEKEGGHRDTLIVQQTEQLKSLSSGSSFSSSWSHFSFSTLPTISRAVELGSEPNVVTSPADCTLELSPPLRPRILNSLSSKRETPTCASDTEPKRNSFEIAPHPPSISAPLPHPPLPRPPIAFTTFPLPLSPPNPPPPQLVTFSLPISTPPTSSLPLPPPLSLPPPPRPPAPRLFPQPPSTSIPSTDSISAPAAKCTASATHARETTSTTQPPASNPQWGAEPHRHPKGILRHVKNLAELEKSVSNMYSHIEKNCPPADPSKLHTFCPAEKTGMKITHDQSQETLVRVVEGIDVQPHSQSTSL</original>
    <variation>KYEMPQYGSRRRLLPPAGQEEYGEVIGEAEEEYEEEEVEPEKVKKPKVEIREPSEEEVVVTVEKPPAAEPTYPTWKRARIFPMIFKKVRGLAEKRGIDLEGEEWRRRLDEEDKDYLQLTLDQEEATESTVESEEESSDYTEYTETESEFSESETTEESESETPSEEAEESSTPESEESESTESEGEKARKNIVLARRRPVVEEIQEVKGKREEPPVEEEEEPPLEEEERAEEGEESEAAPMDESTDLEAQDVPEEGSAESVSMERGVESEESESELSSSSSTSESLSGGPWGFQVPEYDRRKDEEPKKSPGANSEGYNTAL</variation>
    <location>
        <begin position="1463"/>
        <end position="1943"/>
    </location>
</feature>
<feature type="splice variant" id="VSP_046606" description="In isoform 18 and isoform 19." evidence="19">
    <original>NLFLLYHFEQSRGNNSVPEDRSSHRDGMAFSSSTTESHEPAHVEGPLKESQPNPARTFSFVPDEDNLSTHNPLYMESIGQRSTNSDLQPRTDFEELLAPRTQVKSQSLRGPREKIQRVWNQSVSFPRRLMWKAPNRPETIDLVEWQITNQRAECESARCHPSQRGSSNVLLATEDAHESEKEGGHRDTLIVQQTEQLKSLSSGSSFSSSWSHFSFSTLPT</original>
    <variation>KYEMPQYGSRRRLLPPAGQEEYGEVIGEAEEEYEEEEWARKRMIKLVVDREYESSSPGEDSAPESQRSRTHKPSGRSNVNGNIYIAQNGSVVRTRRACVADNLKVPSPGLLGRHLKKLDTLAGTREENVPLNTLFKGPFSTEKAKRTPTLVTFAPCPVVAEHSAVKPSGTRLKHTAEQESMVDSRLSRESMEFHGDSAPSDEEELWMGPWNSLHIPMTKL</variation>
    <location>
        <begin position="1463"/>
        <end position="1682"/>
    </location>
</feature>
<feature type="splice variant" id="VSP_046607" description="In isoform 11 and isoform 12." evidence="19">
    <original>NLFLLYHFEQSRGNNSVPEDRSSHRDGMAFSSSTTESHEPAHVEGPLKESQPNPARTFSFV</original>
    <variation>KSYPWNLGLILARNMDKIITVMSMGMRCPSMEVAVDCCHLLDRRNTAKSLVKLKRNMKKKR</variation>
    <location>
        <begin position="1463"/>
        <end position="1523"/>
    </location>
</feature>
<feature type="splice variant" id="VSP_046608" description="In isoform 24." evidence="18">
    <location>
        <begin position="1464"/>
        <end position="1473"/>
    </location>
</feature>
<feature type="splice variant" id="VSP_046609" description="In isoform 11 and isoform 12." evidence="19">
    <location>
        <begin position="1524"/>
        <end position="1943"/>
    </location>
</feature>
<feature type="splice variant" id="VSP_046610" description="In isoform 20." evidence="19">
    <location>
        <begin position="1668"/>
        <end position="1943"/>
    </location>
</feature>
<feature type="splice variant" id="VSP_046611" description="In isoform 18 and isoform 19." evidence="19">
    <location>
        <begin position="1683"/>
        <end position="1943"/>
    </location>
</feature>
<feature type="mutagenesis site" description="Strongly reduced interaction with CDH23." evidence="11">
    <original>I</original>
    <variation>A</variation>
    <location>
        <position position="48"/>
    </location>
</feature>
<feature type="mutagenesis site" description="Impaired interaction with CDH23." evidence="11">
    <original>R</original>
    <variation>G</variation>
    <location>
        <position position="139"/>
    </location>
</feature>
<feature type="sequence conflict" description="In Ref. 1; AAG53891, 2; AAY24693 and 3; ABC79259/ABC79260/ABC79261/ABC79262/ABC79264/ABC79265/ABC79266/ABC79267/ABC79268/ABC79269/ABC79270/ABC79276/ABC79277." evidence="21" ref="1 2 3">
    <original>I</original>
    <variation>T</variation>
    <location>
        <position position="608"/>
    </location>
</feature>
<feature type="sequence conflict" description="In Ref. 1; AAG53891, 2; AAY24693 and 3; ABC79259/ABC79261/ABC79263/ABC79264/ABC79265/ABC79266/ABC79267/ABC79268/ABC79269/ABC79270/ABC79276/ABC79277." evidence="21" ref="1 2 3">
    <original>V</original>
    <variation>A</variation>
    <location>
        <position position="901"/>
    </location>
</feature>
<feature type="sequence conflict" description="In Ref. 1; AAG53891, 2; AAY24693 and 3; ABC79259/ABC79261/ABC79263/ABC79264/ABC79265/ABC79266/ABC79267." evidence="21" ref="1 2 3">
    <original>S</original>
    <variation>F</variation>
    <location>
        <position position="1748"/>
    </location>
</feature>
<feature type="sequence conflict" description="In Ref. 1; AAG53891, 2; AAY24693 and 3; ABC79259/ABC79261/ABC79263/ABC79264/ABC79265/ABC79266/ABC79267." evidence="21" ref="1 2 3">
    <original>S</original>
    <variation>F</variation>
    <location>
        <position position="1848"/>
    </location>
</feature>
<feature type="sequence conflict" description="In Ref. 4; BAE24546." evidence="21" ref="4">
    <original>W</original>
    <variation>G</variation>
    <location>
        <position position="1859"/>
    </location>
</feature>
<feature type="turn" evidence="22">
    <location>
        <begin position="27"/>
        <end position="30"/>
    </location>
</feature>
<feature type="helix" evidence="22">
    <location>
        <begin position="31"/>
        <end position="34"/>
    </location>
</feature>
<feature type="strand" evidence="22">
    <location>
        <begin position="38"/>
        <end position="41"/>
    </location>
</feature>
<feature type="strand" evidence="22">
    <location>
        <begin position="45"/>
        <end position="52"/>
    </location>
</feature>
<feature type="strand" evidence="22">
    <location>
        <begin position="60"/>
        <end position="63"/>
    </location>
</feature>
<feature type="strand" evidence="22">
    <location>
        <begin position="67"/>
        <end position="69"/>
    </location>
</feature>
<feature type="strand" evidence="22">
    <location>
        <begin position="71"/>
        <end position="75"/>
    </location>
</feature>
<feature type="strand" evidence="22">
    <location>
        <begin position="77"/>
        <end position="84"/>
    </location>
</feature>
<feature type="helix" evidence="22">
    <location>
        <begin position="86"/>
        <end position="88"/>
    </location>
</feature>
<feature type="strand" evidence="22">
    <location>
        <begin position="90"/>
        <end position="93"/>
    </location>
</feature>
<feature type="turn" evidence="22">
    <location>
        <begin position="94"/>
        <end position="97"/>
    </location>
</feature>
<feature type="strand" evidence="22">
    <location>
        <begin position="98"/>
        <end position="101"/>
    </location>
</feature>
<feature type="turn" evidence="22">
    <location>
        <begin position="112"/>
        <end position="114"/>
    </location>
</feature>
<feature type="strand" evidence="22">
    <location>
        <begin position="118"/>
        <end position="127"/>
    </location>
</feature>
<feature type="turn" evidence="22">
    <location>
        <begin position="128"/>
        <end position="130"/>
    </location>
</feature>
<feature type="strand" evidence="22">
    <location>
        <begin position="133"/>
        <end position="143"/>
    </location>
</feature>
<feature type="strand" evidence="22">
    <location>
        <begin position="151"/>
        <end position="155"/>
    </location>
</feature>
<feature type="strand" evidence="22">
    <location>
        <begin position="157"/>
        <end position="162"/>
    </location>
</feature>
<feature type="strand" evidence="22">
    <location>
        <begin position="170"/>
        <end position="172"/>
    </location>
</feature>
<feature type="turn" evidence="22">
    <location>
        <begin position="174"/>
        <end position="179"/>
    </location>
</feature>
<feature type="strand" evidence="22">
    <location>
        <begin position="180"/>
        <end position="182"/>
    </location>
</feature>
<feature type="strand" evidence="23">
    <location>
        <begin position="184"/>
        <end position="186"/>
    </location>
</feature>
<feature type="helix" evidence="22">
    <location>
        <begin position="187"/>
        <end position="190"/>
    </location>
</feature>
<feature type="strand" evidence="22">
    <location>
        <begin position="192"/>
        <end position="197"/>
    </location>
</feature>
<feature type="helix" evidence="22">
    <location>
        <begin position="205"/>
        <end position="208"/>
    </location>
</feature>
<feature type="turn" evidence="22">
    <location>
        <begin position="214"/>
        <end position="216"/>
    </location>
</feature>
<feature type="strand" evidence="22">
    <location>
        <begin position="219"/>
        <end position="221"/>
    </location>
</feature>
<feature type="turn" evidence="22">
    <location>
        <begin position="227"/>
        <end position="229"/>
    </location>
</feature>
<feature type="strand" evidence="22">
    <location>
        <begin position="232"/>
        <end position="241"/>
    </location>
</feature>
<feature type="helix" evidence="22">
    <location>
        <begin position="246"/>
        <end position="248"/>
    </location>
</feature>
<feature type="strand" evidence="22">
    <location>
        <begin position="251"/>
        <end position="259"/>
    </location>
</feature>
<feature type="strand" evidence="29">
    <location>
        <begin position="268"/>
        <end position="275"/>
    </location>
</feature>
<feature type="strand" evidence="29">
    <location>
        <begin position="282"/>
        <end position="284"/>
    </location>
</feature>
<feature type="strand" evidence="29">
    <location>
        <begin position="286"/>
        <end position="292"/>
    </location>
</feature>
<feature type="helix" evidence="29">
    <location>
        <begin position="297"/>
        <end position="300"/>
    </location>
</feature>
<feature type="strand" evidence="29">
    <location>
        <begin position="310"/>
        <end position="314"/>
    </location>
</feature>
<feature type="strand" evidence="29">
    <location>
        <begin position="318"/>
        <end position="320"/>
    </location>
</feature>
<feature type="helix" evidence="29">
    <location>
        <begin position="321"/>
        <end position="323"/>
    </location>
</feature>
<feature type="strand" evidence="29">
    <location>
        <begin position="327"/>
        <end position="336"/>
    </location>
</feature>
<feature type="helix" evidence="29">
    <location>
        <begin position="339"/>
        <end position="342"/>
    </location>
</feature>
<feature type="strand" evidence="29">
    <location>
        <begin position="343"/>
        <end position="345"/>
    </location>
</feature>
<feature type="turn" evidence="29">
    <location>
        <begin position="347"/>
        <end position="349"/>
    </location>
</feature>
<feature type="strand" evidence="29">
    <location>
        <begin position="352"/>
        <end position="356"/>
    </location>
</feature>
<feature type="turn" evidence="29">
    <location>
        <begin position="360"/>
        <end position="362"/>
    </location>
</feature>
<feature type="strand" evidence="29">
    <location>
        <begin position="365"/>
        <end position="377"/>
    </location>
</feature>
<feature type="strand" evidence="29">
    <location>
        <begin position="382"/>
        <end position="391"/>
    </location>
</feature>
<feature type="strand" evidence="31">
    <location>
        <begin position="405"/>
        <end position="411"/>
    </location>
</feature>
<feature type="strand" evidence="31">
    <location>
        <begin position="418"/>
        <end position="421"/>
    </location>
</feature>
<feature type="strand" evidence="26">
    <location>
        <begin position="426"/>
        <end position="428"/>
    </location>
</feature>
<feature type="helix" evidence="31">
    <location>
        <begin position="441"/>
        <end position="444"/>
    </location>
</feature>
<feature type="strand" evidence="31">
    <location>
        <begin position="446"/>
        <end position="452"/>
    </location>
</feature>
<feature type="turn" evidence="31">
    <location>
        <begin position="454"/>
        <end position="456"/>
    </location>
</feature>
<feature type="strand" evidence="31">
    <location>
        <begin position="457"/>
        <end position="459"/>
    </location>
</feature>
<feature type="strand" evidence="31">
    <location>
        <begin position="465"/>
        <end position="470"/>
    </location>
</feature>
<feature type="turn" evidence="31">
    <location>
        <begin position="476"/>
        <end position="478"/>
    </location>
</feature>
<feature type="strand" evidence="31">
    <location>
        <begin position="481"/>
        <end position="490"/>
    </location>
</feature>
<feature type="strand" evidence="31">
    <location>
        <begin position="495"/>
        <end position="505"/>
    </location>
</feature>
<feature type="strand" evidence="26">
    <location>
        <begin position="517"/>
        <end position="524"/>
    </location>
</feature>
<feature type="strand" evidence="26">
    <location>
        <begin position="532"/>
        <end position="535"/>
    </location>
</feature>
<feature type="turn" evidence="26">
    <location>
        <begin position="544"/>
        <end position="547"/>
    </location>
</feature>
<feature type="strand" evidence="26">
    <location>
        <begin position="549"/>
        <end position="557"/>
    </location>
</feature>
<feature type="strand" evidence="26">
    <location>
        <begin position="560"/>
        <end position="563"/>
    </location>
</feature>
<feature type="turn" evidence="26">
    <location>
        <begin position="565"/>
        <end position="567"/>
    </location>
</feature>
<feature type="strand" evidence="26">
    <location>
        <begin position="569"/>
        <end position="572"/>
    </location>
</feature>
<feature type="strand" evidence="26">
    <location>
        <begin position="583"/>
        <end position="592"/>
    </location>
</feature>
<feature type="strand" evidence="26">
    <location>
        <begin position="601"/>
        <end position="611"/>
    </location>
</feature>
<feature type="helix" evidence="26">
    <location>
        <begin position="613"/>
        <end position="615"/>
    </location>
</feature>
<feature type="strand" evidence="27">
    <location>
        <begin position="626"/>
        <end position="631"/>
    </location>
</feature>
<feature type="strand" evidence="27">
    <location>
        <begin position="639"/>
        <end position="642"/>
    </location>
</feature>
<feature type="strand" evidence="27">
    <location>
        <begin position="654"/>
        <end position="660"/>
    </location>
</feature>
<feature type="strand" evidence="27">
    <location>
        <begin position="666"/>
        <end position="668"/>
    </location>
</feature>
<feature type="strand" evidence="27">
    <location>
        <begin position="670"/>
        <end position="672"/>
    </location>
</feature>
<feature type="strand" evidence="27">
    <location>
        <begin position="674"/>
        <end position="677"/>
    </location>
</feature>
<feature type="turn" evidence="27">
    <location>
        <begin position="683"/>
        <end position="685"/>
    </location>
</feature>
<feature type="strand" evidence="27">
    <location>
        <begin position="688"/>
        <end position="696"/>
    </location>
</feature>
<feature type="strand" evidence="27">
    <location>
        <begin position="703"/>
        <end position="713"/>
    </location>
</feature>
<feature type="strand" evidence="27">
    <location>
        <begin position="724"/>
        <end position="726"/>
    </location>
</feature>
<feature type="strand" evidence="25">
    <location>
        <begin position="728"/>
        <end position="735"/>
    </location>
</feature>
<feature type="strand" evidence="25">
    <location>
        <begin position="740"/>
        <end position="743"/>
    </location>
</feature>
<feature type="helix" evidence="27">
    <location>
        <begin position="752"/>
        <end position="755"/>
    </location>
</feature>
<feature type="strand" evidence="25">
    <location>
        <begin position="757"/>
        <end position="763"/>
    </location>
</feature>
<feature type="turn" evidence="25">
    <location>
        <begin position="765"/>
        <end position="767"/>
    </location>
</feature>
<feature type="strand" evidence="25">
    <location>
        <begin position="768"/>
        <end position="770"/>
    </location>
</feature>
<feature type="strand" evidence="25">
    <location>
        <begin position="774"/>
        <end position="780"/>
    </location>
</feature>
<feature type="turn" evidence="25">
    <location>
        <begin position="784"/>
        <end position="786"/>
    </location>
</feature>
<feature type="strand" evidence="25">
    <location>
        <begin position="789"/>
        <end position="798"/>
    </location>
</feature>
<feature type="strand" evidence="25">
    <location>
        <begin position="800"/>
        <end position="802"/>
    </location>
</feature>
<feature type="strand" evidence="25">
    <location>
        <begin position="805"/>
        <end position="815"/>
    </location>
</feature>
<feature type="strand" evidence="25">
    <location>
        <begin position="823"/>
        <end position="825"/>
    </location>
</feature>
<feature type="strand" evidence="25">
    <location>
        <begin position="827"/>
        <end position="834"/>
    </location>
</feature>
<feature type="strand" evidence="25">
    <location>
        <begin position="842"/>
        <end position="845"/>
    </location>
</feature>
<feature type="strand" evidence="25">
    <location>
        <begin position="857"/>
        <end position="861"/>
    </location>
</feature>
<feature type="helix" evidence="25">
    <location>
        <begin position="864"/>
        <end position="866"/>
    </location>
</feature>
<feature type="turn" evidence="25">
    <location>
        <begin position="867"/>
        <end position="869"/>
    </location>
</feature>
<feature type="strand" evidence="25">
    <location>
        <begin position="870"/>
        <end position="872"/>
    </location>
</feature>
<feature type="turn" evidence="25">
    <location>
        <begin position="874"/>
        <end position="876"/>
    </location>
</feature>
<feature type="strand" evidence="25">
    <location>
        <begin position="878"/>
        <end position="883"/>
    </location>
</feature>
<feature type="strand" evidence="25">
    <location>
        <begin position="896"/>
        <end position="905"/>
    </location>
</feature>
<feature type="strand" evidence="25">
    <location>
        <begin position="913"/>
        <end position="922"/>
    </location>
</feature>
<feature type="strand" evidence="30">
    <location>
        <begin position="930"/>
        <end position="932"/>
    </location>
</feature>
<feature type="strand" evidence="30">
    <location>
        <begin position="934"/>
        <end position="940"/>
    </location>
</feature>
<feature type="strand" evidence="30">
    <location>
        <begin position="949"/>
        <end position="952"/>
    </location>
</feature>
<feature type="strand" evidence="24">
    <location>
        <begin position="955"/>
        <end position="957"/>
    </location>
</feature>
<feature type="strand" evidence="30">
    <location>
        <begin position="961"/>
        <end position="963"/>
    </location>
</feature>
<feature type="helix" evidence="30">
    <location>
        <begin position="964"/>
        <end position="966"/>
    </location>
</feature>
<feature type="strand" evidence="30">
    <location>
        <begin position="969"/>
        <end position="973"/>
    </location>
</feature>
<feature type="helix" evidence="30">
    <location>
        <begin position="978"/>
        <end position="983"/>
    </location>
</feature>
<feature type="strand" evidence="30">
    <location>
        <begin position="984"/>
        <end position="986"/>
    </location>
</feature>
<feature type="turn" evidence="30">
    <location>
        <begin position="988"/>
        <end position="990"/>
    </location>
</feature>
<feature type="strand" evidence="30">
    <location>
        <begin position="992"/>
        <end position="997"/>
    </location>
</feature>
<feature type="strand" evidence="30">
    <location>
        <begin position="1006"/>
        <end position="1014"/>
    </location>
</feature>
<feature type="strand" evidence="30">
    <location>
        <begin position="1017"/>
        <end position="1019"/>
    </location>
</feature>
<feature type="strand" evidence="30">
    <location>
        <begin position="1022"/>
        <end position="1031"/>
    </location>
</feature>
<feature type="helix" evidence="30">
    <location>
        <begin position="1034"/>
        <end position="1036"/>
    </location>
</feature>
<feature type="strand" evidence="30">
    <location>
        <begin position="1039"/>
        <end position="1041"/>
    </location>
</feature>
<feature type="strand" evidence="30">
    <location>
        <begin position="1043"/>
        <end position="1045"/>
    </location>
</feature>
<feature type="strand" evidence="30">
    <location>
        <begin position="1059"/>
        <end position="1062"/>
    </location>
</feature>
<feature type="strand" evidence="30">
    <location>
        <begin position="1072"/>
        <end position="1079"/>
    </location>
</feature>
<feature type="strand" evidence="30">
    <location>
        <begin position="1085"/>
        <end position="1088"/>
    </location>
</feature>
<feature type="turn" evidence="30">
    <location>
        <begin position="1089"/>
        <end position="1092"/>
    </location>
</feature>
<feature type="strand" evidence="30">
    <location>
        <begin position="1093"/>
        <end position="1096"/>
    </location>
</feature>
<feature type="turn" evidence="30">
    <location>
        <begin position="1102"/>
        <end position="1104"/>
    </location>
</feature>
<feature type="strand" evidence="30">
    <location>
        <begin position="1106"/>
        <end position="1116"/>
    </location>
</feature>
<feature type="helix" evidence="30">
    <location>
        <begin position="1117"/>
        <end position="1122"/>
    </location>
</feature>
<feature type="turn" evidence="30">
    <location>
        <begin position="1129"/>
        <end position="1131"/>
    </location>
</feature>
<feature type="strand" evidence="30">
    <location>
        <begin position="1132"/>
        <end position="1140"/>
    </location>
</feature>
<feature type="strand" evidence="28">
    <location>
        <begin position="1147"/>
        <end position="1150"/>
    </location>
</feature>
<feature type="strand" evidence="28">
    <location>
        <begin position="1152"/>
        <end position="1159"/>
    </location>
</feature>
<feature type="strand" evidence="28">
    <location>
        <begin position="1167"/>
        <end position="1170"/>
    </location>
</feature>
<feature type="strand" evidence="28">
    <location>
        <begin position="1173"/>
        <end position="1175"/>
    </location>
</feature>
<feature type="turn" evidence="28">
    <location>
        <begin position="1176"/>
        <end position="1178"/>
    </location>
</feature>
<feature type="helix" evidence="30">
    <location>
        <begin position="1179"/>
        <end position="1182"/>
    </location>
</feature>
<feature type="strand" evidence="28">
    <location>
        <begin position="1185"/>
        <end position="1189"/>
    </location>
</feature>
<feature type="helix" evidence="28">
    <location>
        <begin position="1194"/>
        <end position="1196"/>
    </location>
</feature>
<feature type="strand" evidence="28">
    <location>
        <begin position="1200"/>
        <end position="1202"/>
    </location>
</feature>
<feature type="turn" evidence="28">
    <location>
        <begin position="1204"/>
        <end position="1206"/>
    </location>
</feature>
<feature type="strand" evidence="28">
    <location>
        <begin position="1208"/>
        <end position="1211"/>
    </location>
</feature>
<feature type="strand" evidence="28">
    <location>
        <begin position="1222"/>
        <end position="1230"/>
    </location>
</feature>
<feature type="helix" evidence="28">
    <location>
        <begin position="1232"/>
        <end position="1234"/>
    </location>
</feature>
<feature type="strand" evidence="28">
    <location>
        <begin position="1238"/>
        <end position="1248"/>
    </location>
</feature>
<feature type="helix" evidence="28">
    <location>
        <begin position="1250"/>
        <end position="1252"/>
    </location>
</feature>
<feature type="strand" evidence="28">
    <location>
        <begin position="1254"/>
        <end position="1260"/>
    </location>
</feature>
<feature type="helix" evidence="28">
    <location>
        <begin position="1262"/>
        <end position="1267"/>
    </location>
</feature>
<feature type="helix" evidence="28">
    <location>
        <begin position="1269"/>
        <end position="1283"/>
    </location>
</feature>
<feature type="strand" evidence="28">
    <location>
        <begin position="1288"/>
        <end position="1300"/>
    </location>
</feature>
<feature type="helix" evidence="28">
    <location>
        <begin position="1301"/>
        <end position="1303"/>
    </location>
</feature>
<feature type="strand" evidence="28">
    <location>
        <begin position="1305"/>
        <end position="1318"/>
    </location>
</feature>
<feature type="turn" evidence="28">
    <location>
        <begin position="1320"/>
        <end position="1322"/>
    </location>
</feature>
<feature type="strand" evidence="28">
    <location>
        <begin position="1323"/>
        <end position="1325"/>
    </location>
</feature>
<feature type="helix" evidence="28">
    <location>
        <begin position="1328"/>
        <end position="1336"/>
    </location>
</feature>
<feature type="helix" evidence="28">
    <location>
        <begin position="1339"/>
        <end position="1350"/>
    </location>
</feature>
<feature type="strand" evidence="28">
    <location>
        <begin position="1356"/>
        <end position="1360"/>
    </location>
</feature>
<feature type="helix" evidence="28">
    <location>
        <begin position="1363"/>
        <end position="1370"/>
    </location>
</feature>
<feature type="strand" evidence="28">
    <location>
        <begin position="1374"/>
        <end position="1376"/>
    </location>
</feature>
<dbReference type="EMBL" id="AF281899">
    <property type="protein sequence ID" value="AAG53891.1"/>
    <property type="molecule type" value="mRNA"/>
</dbReference>
<dbReference type="EMBL" id="AY949849">
    <property type="protein sequence ID" value="AAY24693.1"/>
    <property type="molecule type" value="mRNA"/>
</dbReference>
<dbReference type="EMBL" id="DQ354396">
    <property type="protein sequence ID" value="ABC79259.1"/>
    <property type="molecule type" value="mRNA"/>
</dbReference>
<dbReference type="EMBL" id="DQ354397">
    <property type="protein sequence ID" value="ABC79260.1"/>
    <property type="molecule type" value="mRNA"/>
</dbReference>
<dbReference type="EMBL" id="DQ354398">
    <property type="protein sequence ID" value="ABC79261.1"/>
    <property type="molecule type" value="mRNA"/>
</dbReference>
<dbReference type="EMBL" id="DQ354399">
    <property type="protein sequence ID" value="ABC79262.1"/>
    <property type="molecule type" value="mRNA"/>
</dbReference>
<dbReference type="EMBL" id="DQ354400">
    <property type="protein sequence ID" value="ABC79263.1"/>
    <property type="molecule type" value="mRNA"/>
</dbReference>
<dbReference type="EMBL" id="DQ354401">
    <property type="protein sequence ID" value="ABC79264.1"/>
    <property type="molecule type" value="mRNA"/>
</dbReference>
<dbReference type="EMBL" id="DQ354402">
    <property type="protein sequence ID" value="ABC79265.1"/>
    <property type="molecule type" value="mRNA"/>
</dbReference>
<dbReference type="EMBL" id="DQ354403">
    <property type="protein sequence ID" value="ABC79266.1"/>
    <property type="molecule type" value="mRNA"/>
</dbReference>
<dbReference type="EMBL" id="DQ354404">
    <property type="protein sequence ID" value="ABC79267.1"/>
    <property type="molecule type" value="mRNA"/>
</dbReference>
<dbReference type="EMBL" id="DQ354405">
    <property type="protein sequence ID" value="ABC79268.1"/>
    <property type="molecule type" value="mRNA"/>
</dbReference>
<dbReference type="EMBL" id="DQ354406">
    <property type="protein sequence ID" value="ABC79269.1"/>
    <property type="molecule type" value="mRNA"/>
</dbReference>
<dbReference type="EMBL" id="DQ354407">
    <property type="protein sequence ID" value="ABC79270.1"/>
    <property type="status" value="ALT_INIT"/>
    <property type="molecule type" value="mRNA"/>
</dbReference>
<dbReference type="EMBL" id="DQ354408">
    <property type="protein sequence ID" value="ABC79271.1"/>
    <property type="molecule type" value="mRNA"/>
</dbReference>
<dbReference type="EMBL" id="DQ354409">
    <property type="protein sequence ID" value="ABC79272.1"/>
    <property type="molecule type" value="mRNA"/>
</dbReference>
<dbReference type="EMBL" id="DQ354410">
    <property type="protein sequence ID" value="ABC79273.1"/>
    <property type="molecule type" value="mRNA"/>
</dbReference>
<dbReference type="EMBL" id="DQ354411">
    <property type="protein sequence ID" value="ABC79274.1"/>
    <property type="molecule type" value="mRNA"/>
</dbReference>
<dbReference type="EMBL" id="DQ354412">
    <property type="protein sequence ID" value="ABC79275.1"/>
    <property type="molecule type" value="mRNA"/>
</dbReference>
<dbReference type="EMBL" id="DQ354413">
    <property type="protein sequence ID" value="ABC79276.1"/>
    <property type="molecule type" value="mRNA"/>
</dbReference>
<dbReference type="EMBL" id="DQ354414">
    <property type="protein sequence ID" value="ABC79277.1"/>
    <property type="molecule type" value="mRNA"/>
</dbReference>
<dbReference type="EMBL" id="DQ354415">
    <property type="protein sequence ID" value="ABC79278.1"/>
    <property type="molecule type" value="mRNA"/>
</dbReference>
<dbReference type="EMBL" id="DQ354416">
    <property type="protein sequence ID" value="ABC79279.1"/>
    <property type="molecule type" value="mRNA"/>
</dbReference>
<dbReference type="EMBL" id="DQ354417">
    <property type="protein sequence ID" value="ABC79280.1"/>
    <property type="molecule type" value="mRNA"/>
</dbReference>
<dbReference type="EMBL" id="DQ354418">
    <property type="protein sequence ID" value="ABC79281.1"/>
    <property type="molecule type" value="mRNA"/>
</dbReference>
<dbReference type="EMBL" id="AK139154">
    <property type="protein sequence ID" value="BAE23903.1"/>
    <property type="molecule type" value="mRNA"/>
</dbReference>
<dbReference type="EMBL" id="AK141024">
    <property type="protein sequence ID" value="BAE24546.1"/>
    <property type="molecule type" value="mRNA"/>
</dbReference>
<dbReference type="EMBL" id="AC108392">
    <property type="status" value="NOT_ANNOTATED_CDS"/>
    <property type="molecule type" value="Genomic_DNA"/>
</dbReference>
<dbReference type="EMBL" id="AC119894">
    <property type="status" value="NOT_ANNOTATED_CDS"/>
    <property type="molecule type" value="Genomic_DNA"/>
</dbReference>
<dbReference type="EMBL" id="AC121142">
    <property type="status" value="NOT_ANNOTATED_CDS"/>
    <property type="molecule type" value="Genomic_DNA"/>
</dbReference>
<dbReference type="EMBL" id="AC121602">
    <property type="status" value="NOT_ANNOTATED_CDS"/>
    <property type="molecule type" value="Genomic_DNA"/>
</dbReference>
<dbReference type="EMBL" id="AC121832">
    <property type="status" value="NOT_ANNOTATED_CDS"/>
    <property type="molecule type" value="Genomic_DNA"/>
</dbReference>
<dbReference type="EMBL" id="AC123032">
    <property type="status" value="NOT_ANNOTATED_CDS"/>
    <property type="molecule type" value="Genomic_DNA"/>
</dbReference>
<dbReference type="EMBL" id="AC123809">
    <property type="status" value="NOT_ANNOTATED_CDS"/>
    <property type="molecule type" value="Genomic_DNA"/>
</dbReference>
<dbReference type="EMBL" id="AC144802">
    <property type="status" value="NOT_ANNOTATED_CDS"/>
    <property type="molecule type" value="Genomic_DNA"/>
</dbReference>
<dbReference type="EMBL" id="AC147721">
    <property type="status" value="NOT_ANNOTATED_CDS"/>
    <property type="molecule type" value="Genomic_DNA"/>
</dbReference>
<dbReference type="EMBL" id="AC153858">
    <property type="status" value="NOT_ANNOTATED_CDS"/>
    <property type="molecule type" value="Genomic_DNA"/>
</dbReference>
<dbReference type="EMBL" id="AC158800">
    <property type="status" value="NOT_ANNOTATED_CDS"/>
    <property type="molecule type" value="Genomic_DNA"/>
</dbReference>
<dbReference type="EMBL" id="AC159477">
    <property type="status" value="NOT_ANNOTATED_CDS"/>
    <property type="molecule type" value="Genomic_DNA"/>
</dbReference>
<dbReference type="EMBL" id="AC186813">
    <property type="status" value="NOT_ANNOTATED_CDS"/>
    <property type="molecule type" value="Genomic_DNA"/>
</dbReference>
<dbReference type="EMBL" id="AC188091">
    <property type="status" value="NOT_ANNOTATED_CDS"/>
    <property type="molecule type" value="Genomic_DNA"/>
</dbReference>
<dbReference type="EMBL" id="CAAA01110489">
    <property type="status" value="NOT_ANNOTATED_CDS"/>
    <property type="molecule type" value="Genomic_DNA"/>
</dbReference>
<dbReference type="EMBL" id="HQ404375">
    <property type="protein sequence ID" value="ADP09331.1"/>
    <property type="molecule type" value="mRNA"/>
</dbReference>
<dbReference type="EMBL" id="HQ420254">
    <property type="protein sequence ID" value="ADT91308.1"/>
    <property type="molecule type" value="mRNA"/>
</dbReference>
<dbReference type="CCDS" id="CCDS35934.1">
    <molecule id="Q99PJ1-1"/>
</dbReference>
<dbReference type="CCDS" id="CCDS48594.1">
    <molecule id="Q99PJ1-6"/>
</dbReference>
<dbReference type="CCDS" id="CCDS48595.1">
    <molecule id="Q99PJ1-7"/>
</dbReference>
<dbReference type="CCDS" id="CCDS56711.1">
    <molecule id="Q99PJ1-10"/>
</dbReference>
<dbReference type="CCDS" id="CCDS56712.1">
    <molecule id="Q99PJ1-21"/>
</dbReference>
<dbReference type="CCDS" id="CCDS56713.1">
    <molecule id="Q99PJ1-18"/>
</dbReference>
<dbReference type="CCDS" id="CCDS56714.1">
    <molecule id="Q99PJ1-22"/>
</dbReference>
<dbReference type="CCDS" id="CCDS56715.1">
    <molecule id="Q99PJ1-2"/>
</dbReference>
<dbReference type="CCDS" id="CCDS56716.1">
    <molecule id="Q99PJ1-11"/>
</dbReference>
<dbReference type="CCDS" id="CCDS56717.1">
    <molecule id="Q99PJ1-19"/>
</dbReference>
<dbReference type="CCDS" id="CCDS56718.1">
    <molecule id="Q99PJ1-4"/>
</dbReference>
<dbReference type="CCDS" id="CCDS56719.1">
    <molecule id="Q99PJ1-5"/>
</dbReference>
<dbReference type="CCDS" id="CCDS56720.1">
    <molecule id="Q99PJ1-8"/>
</dbReference>
<dbReference type="CCDS" id="CCDS56721.1">
    <molecule id="Q99PJ1-9"/>
</dbReference>
<dbReference type="RefSeq" id="NP_001136207.1">
    <molecule id="Q99PJ1-2"/>
    <property type="nucleotide sequence ID" value="NM_001142735.1"/>
</dbReference>
<dbReference type="RefSeq" id="NP_001136208.1">
    <molecule id="Q99PJ1-4"/>
    <property type="nucleotide sequence ID" value="NM_001142736.1"/>
</dbReference>
<dbReference type="RefSeq" id="NP_001136209.1">
    <molecule id="Q99PJ1-5"/>
    <property type="nucleotide sequence ID" value="NM_001142737.1"/>
</dbReference>
<dbReference type="RefSeq" id="NP_001136210.1">
    <molecule id="Q99PJ1-7"/>
    <property type="nucleotide sequence ID" value="NM_001142738.1"/>
</dbReference>
<dbReference type="RefSeq" id="NP_001136211.1">
    <molecule id="Q99PJ1-8"/>
    <property type="nucleotide sequence ID" value="NM_001142739.1"/>
</dbReference>
<dbReference type="RefSeq" id="NP_001136212.1">
    <molecule id="Q99PJ1-6"/>
    <property type="nucleotide sequence ID" value="NM_001142740.1"/>
</dbReference>
<dbReference type="RefSeq" id="NP_001136213.1">
    <molecule id="Q99PJ1-9"/>
    <property type="nucleotide sequence ID" value="NM_001142741.1"/>
</dbReference>
<dbReference type="RefSeq" id="NP_001136214.1">
    <molecule id="Q99PJ1-10"/>
    <property type="nucleotide sequence ID" value="NM_001142742.1"/>
</dbReference>
<dbReference type="RefSeq" id="NP_001136215.1">
    <molecule id="Q99PJ1-11"/>
    <property type="nucleotide sequence ID" value="NM_001142743.1"/>
</dbReference>
<dbReference type="RefSeq" id="NP_001136218.1">
    <molecule id="Q99PJ1-18"/>
    <property type="nucleotide sequence ID" value="NM_001142746.1"/>
</dbReference>
<dbReference type="RefSeq" id="NP_001136219.1">
    <molecule id="Q99PJ1-21"/>
    <property type="nucleotide sequence ID" value="NM_001142747.1"/>
</dbReference>
<dbReference type="RefSeq" id="NP_001136220.1">
    <molecule id="Q99PJ1-22"/>
    <property type="nucleotide sequence ID" value="NM_001142748.1"/>
</dbReference>
<dbReference type="RefSeq" id="NP_001136232.1">
    <molecule id="Q99PJ1-19"/>
    <property type="nucleotide sequence ID" value="NM_001142760.1"/>
</dbReference>
<dbReference type="RefSeq" id="NP_075604.2">
    <molecule id="Q99PJ1-1"/>
    <property type="nucleotide sequence ID" value="NM_023115.3"/>
</dbReference>
<dbReference type="RefSeq" id="XP_006513219.1">
    <molecule id="Q99PJ1-26"/>
    <property type="nucleotide sequence ID" value="XM_006513156.5"/>
</dbReference>
<dbReference type="PDB" id="4APX">
    <property type="method" value="X-ray"/>
    <property type="resolution" value="1.65 A"/>
    <property type="chains" value="B=27-259"/>
</dbReference>
<dbReference type="PDB" id="4AQ8">
    <property type="method" value="X-ray"/>
    <property type="resolution" value="2.63 A"/>
    <property type="chains" value="C/D=27-259"/>
</dbReference>
<dbReference type="PDB" id="4AQA">
    <property type="method" value="X-ray"/>
    <property type="resolution" value="1.96 A"/>
    <property type="chains" value="B=27-259"/>
</dbReference>
<dbReference type="PDB" id="4AQE">
    <property type="method" value="X-ray"/>
    <property type="resolution" value="2.27 A"/>
    <property type="chains" value="B=27-259"/>
</dbReference>
<dbReference type="PDB" id="4AXW">
    <property type="method" value="X-ray"/>
    <property type="resolution" value="2.23 A"/>
    <property type="chains" value="B=27-259"/>
</dbReference>
<dbReference type="PDB" id="4XXW">
    <property type="method" value="X-ray"/>
    <property type="resolution" value="2.26 A"/>
    <property type="chains" value="A/B=36-259"/>
</dbReference>
<dbReference type="PDB" id="5KJ4">
    <property type="method" value="X-ray"/>
    <property type="resolution" value="3.35 A"/>
    <property type="chains" value="A/B/C/D=924-1149"/>
</dbReference>
<dbReference type="PDB" id="5TPK">
    <property type="method" value="X-ray"/>
    <property type="resolution" value="2.00 A"/>
    <property type="chains" value="A=715-923"/>
</dbReference>
<dbReference type="PDB" id="5W1D">
    <property type="method" value="X-ray"/>
    <property type="resolution" value="3.35 A"/>
    <property type="chains" value="A=401-818"/>
</dbReference>
<dbReference type="PDB" id="6BWN">
    <property type="method" value="X-ray"/>
    <property type="resolution" value="2.94 A"/>
    <property type="chains" value="A=615-818"/>
</dbReference>
<dbReference type="PDB" id="6C10">
    <property type="method" value="X-ray"/>
    <property type="resolution" value="1.40 A"/>
    <property type="chains" value="A=1144-1381"/>
</dbReference>
<dbReference type="PDB" id="6C13">
    <property type="method" value="EM"/>
    <property type="resolution" value="11.33 A"/>
    <property type="chains" value="A/B=821-1465"/>
</dbReference>
<dbReference type="PDB" id="6C14">
    <property type="method" value="EM"/>
    <property type="resolution" value="4.50 A"/>
    <property type="chains" value="A/C=1144-1465"/>
</dbReference>
<dbReference type="PDB" id="6CV7">
    <property type="method" value="X-ray"/>
    <property type="resolution" value="1.69 A"/>
    <property type="chains" value="A=27-395"/>
</dbReference>
<dbReference type="PDB" id="6EET">
    <property type="method" value="X-ray"/>
    <property type="resolution" value="3.23 A"/>
    <property type="chains" value="A=924-1379"/>
</dbReference>
<dbReference type="PDB" id="6N22">
    <property type="method" value="X-ray"/>
    <property type="resolution" value="2.40 A"/>
    <property type="chains" value="A=27-265"/>
</dbReference>
<dbReference type="PDB" id="8TON">
    <property type="method" value="X-ray"/>
    <property type="resolution" value="1.94 A"/>
    <property type="chains" value="A=262-510"/>
</dbReference>
<dbReference type="PDB" id="8UMZ">
    <property type="method" value="X-ray"/>
    <property type="resolution" value="1.63 A"/>
    <property type="chains" value="A/B=391-820"/>
</dbReference>
<dbReference type="PDBsum" id="4APX"/>
<dbReference type="PDBsum" id="4AQ8"/>
<dbReference type="PDBsum" id="4AQA"/>
<dbReference type="PDBsum" id="4AQE"/>
<dbReference type="PDBsum" id="4AXW"/>
<dbReference type="PDBsum" id="4XXW"/>
<dbReference type="PDBsum" id="5KJ4"/>
<dbReference type="PDBsum" id="5TPK"/>
<dbReference type="PDBsum" id="5W1D"/>
<dbReference type="PDBsum" id="6BWN"/>
<dbReference type="PDBsum" id="6C10"/>
<dbReference type="PDBsum" id="6C13"/>
<dbReference type="PDBsum" id="6C14"/>
<dbReference type="PDBsum" id="6CV7"/>
<dbReference type="PDBsum" id="6EET"/>
<dbReference type="PDBsum" id="6N22"/>
<dbReference type="PDBsum" id="8TON"/>
<dbReference type="PDBsum" id="8UMZ"/>
<dbReference type="EMDB" id="EMD-7327"/>
<dbReference type="EMDB" id="EMD-7328"/>
<dbReference type="SMR" id="Q99PJ1"/>
<dbReference type="BioGRID" id="198282">
    <property type="interactions" value="3"/>
</dbReference>
<dbReference type="CORUM" id="Q99PJ1"/>
<dbReference type="DIP" id="DIP-42151N"/>
<dbReference type="FunCoup" id="Q99PJ1">
    <property type="interactions" value="504"/>
</dbReference>
<dbReference type="IntAct" id="Q99PJ1">
    <property type="interactions" value="3"/>
</dbReference>
<dbReference type="MINT" id="Q99PJ1"/>
<dbReference type="STRING" id="10090.ENSMUSP00000141792"/>
<dbReference type="GlyCosmos" id="Q99PJ1">
    <property type="glycosylation" value="13 sites, No reported glycans"/>
</dbReference>
<dbReference type="GlyGen" id="Q99PJ1">
    <property type="glycosylation" value="20 sites, 8 N-linked glycans (10 sites)"/>
</dbReference>
<dbReference type="iPTMnet" id="Q99PJ1"/>
<dbReference type="PhosphoSitePlus" id="Q99PJ1"/>
<dbReference type="PaxDb" id="10090-ENSMUSP00000101066"/>
<dbReference type="ProteomicsDB" id="288267">
    <molecule id="Q99PJ1-1"/>
</dbReference>
<dbReference type="ProteomicsDB" id="288268">
    <molecule id="Q99PJ1-2"/>
</dbReference>
<dbReference type="ProteomicsDB" id="288269">
    <molecule id="Q99PJ1-3"/>
</dbReference>
<dbReference type="ProteomicsDB" id="288270">
    <molecule id="Q99PJ1-4"/>
</dbReference>
<dbReference type="ProteomicsDB" id="288271">
    <molecule id="Q99PJ1-5"/>
</dbReference>
<dbReference type="ProteomicsDB" id="288272">
    <molecule id="Q99PJ1-6"/>
</dbReference>
<dbReference type="ProteomicsDB" id="288273">
    <molecule id="Q99PJ1-7"/>
</dbReference>
<dbReference type="ProteomicsDB" id="288274">
    <molecule id="Q99PJ1-8"/>
</dbReference>
<dbReference type="ProteomicsDB" id="288275">
    <molecule id="Q99PJ1-9"/>
</dbReference>
<dbReference type="ProteomicsDB" id="288276">
    <molecule id="Q99PJ1-10"/>
</dbReference>
<dbReference type="ProteomicsDB" id="288277">
    <molecule id="Q99PJ1-11"/>
</dbReference>
<dbReference type="ProteomicsDB" id="288278">
    <molecule id="Q99PJ1-12"/>
</dbReference>
<dbReference type="ProteomicsDB" id="288279">
    <molecule id="Q99PJ1-13"/>
</dbReference>
<dbReference type="ProteomicsDB" id="289304">
    <molecule id="Q99PJ1-14"/>
</dbReference>
<dbReference type="ProteomicsDB" id="289305">
    <molecule id="Q99PJ1-15"/>
</dbReference>
<dbReference type="ProteomicsDB" id="289306">
    <molecule id="Q99PJ1-16"/>
</dbReference>
<dbReference type="ProteomicsDB" id="289307">
    <molecule id="Q99PJ1-17"/>
</dbReference>
<dbReference type="ProteomicsDB" id="289308">
    <molecule id="Q99PJ1-18"/>
</dbReference>
<dbReference type="ProteomicsDB" id="289309">
    <molecule id="Q99PJ1-19"/>
</dbReference>
<dbReference type="ProteomicsDB" id="289310">
    <molecule id="Q99PJ1-20"/>
</dbReference>
<dbReference type="ProteomicsDB" id="289311">
    <molecule id="Q99PJ1-21"/>
</dbReference>
<dbReference type="ProteomicsDB" id="289312">
    <molecule id="Q99PJ1-22"/>
</dbReference>
<dbReference type="ProteomicsDB" id="289313">
    <molecule id="Q99PJ1-23"/>
</dbReference>
<dbReference type="ProteomicsDB" id="289314">
    <molecule id="Q99PJ1-24"/>
</dbReference>
<dbReference type="ProteomicsDB" id="289315">
    <molecule id="Q99PJ1-25"/>
</dbReference>
<dbReference type="ProteomicsDB" id="289316">
    <molecule id="Q99PJ1-26"/>
</dbReference>
<dbReference type="Antibodypedia" id="27955">
    <property type="antibodies" value="99 antibodies from 20 providers"/>
</dbReference>
<dbReference type="DNASU" id="11994"/>
<dbReference type="Ensembl" id="ENSMUST00000092420.13">
    <molecule id="Q99PJ1-6"/>
    <property type="protein sequence ID" value="ENSMUSP00000090076.7"/>
    <property type="gene ID" value="ENSMUSG00000052613.18"/>
</dbReference>
<dbReference type="Ensembl" id="ENSMUST00000105424.10">
    <molecule id="Q99PJ1-2"/>
    <property type="protein sequence ID" value="ENSMUSP00000101064.4"/>
    <property type="gene ID" value="ENSMUSG00000052613.18"/>
</dbReference>
<dbReference type="Ensembl" id="ENSMUST00000105426.10">
    <molecule id="Q99PJ1-4"/>
    <property type="protein sequence ID" value="ENSMUSP00000101066.5"/>
    <property type="gene ID" value="ENSMUSG00000052613.18"/>
</dbReference>
<dbReference type="Ensembl" id="ENSMUST00000105429.10">
    <molecule id="Q99PJ1-5"/>
    <property type="protein sequence ID" value="ENSMUSP00000101069.4"/>
    <property type="gene ID" value="ENSMUSG00000052613.18"/>
</dbReference>
<dbReference type="Ensembl" id="ENSMUST00000124046.8">
    <molecule id="Q99PJ1-12"/>
    <property type="protein sequence ID" value="ENSMUSP00000121130.2"/>
    <property type="gene ID" value="ENSMUSG00000052613.18"/>
</dbReference>
<dbReference type="Ensembl" id="ENSMUST00000125006.9">
    <molecule id="Q99PJ1-22"/>
    <property type="protein sequence ID" value="ENSMUSP00000120056.3"/>
    <property type="gene ID" value="ENSMUSG00000052613.18"/>
</dbReference>
<dbReference type="Ensembl" id="ENSMUST00000125055.9">
    <molecule id="Q99PJ1-3"/>
    <property type="protein sequence ID" value="ENSMUSP00000114326.3"/>
    <property type="gene ID" value="ENSMUSG00000052613.18"/>
</dbReference>
<dbReference type="Ensembl" id="ENSMUST00000125517.9">
    <molecule id="Q99PJ1-16"/>
    <property type="protein sequence ID" value="ENSMUSP00000115399.3"/>
    <property type="gene ID" value="ENSMUSG00000052613.18"/>
</dbReference>
<dbReference type="Ensembl" id="ENSMUST00000126920.9">
    <molecule id="Q99PJ1-8"/>
    <property type="protein sequence ID" value="ENSMUSP00000121939.3"/>
    <property type="gene ID" value="ENSMUSG00000052613.18"/>
</dbReference>
<dbReference type="Ensembl" id="ENSMUST00000129404.9">
    <molecule id="Q99PJ1-9"/>
    <property type="protein sequence ID" value="ENSMUSP00000117731.3"/>
    <property type="gene ID" value="ENSMUSG00000052613.18"/>
</dbReference>
<dbReference type="Ensembl" id="ENSMUST00000131321.9">
    <molecule id="Q99PJ1-4"/>
    <property type="protein sequence ID" value="ENSMUSP00000122911.3"/>
    <property type="gene ID" value="ENSMUSG00000052613.18"/>
</dbReference>
<dbReference type="Ensembl" id="ENSMUST00000131724.9">
    <molecule id="Q99PJ1-11"/>
    <property type="protein sequence ID" value="ENSMUSP00000122466.3"/>
    <property type="gene ID" value="ENSMUSG00000052613.18"/>
</dbReference>
<dbReference type="Ensembl" id="ENSMUST00000134009.9">
    <molecule id="Q99PJ1-23"/>
    <property type="protein sequence ID" value="ENSMUSP00000120618.3"/>
    <property type="gene ID" value="ENSMUSG00000052613.18"/>
</dbReference>
<dbReference type="Ensembl" id="ENSMUST00000136096.9">
    <molecule id="Q99PJ1-3"/>
    <property type="protein sequence ID" value="ENSMUSP00000121534.3"/>
    <property type="gene ID" value="ENSMUSG00000052613.18"/>
</dbReference>
<dbReference type="Ensembl" id="ENSMUST00000144302.9">
    <molecule id="Q99PJ1-13"/>
    <property type="protein sequence ID" value="ENSMUSP00000122606.3"/>
    <property type="gene ID" value="ENSMUSG00000052613.18"/>
</dbReference>
<dbReference type="Ensembl" id="ENSMUST00000146682.8">
    <molecule id="Q99PJ1-20"/>
    <property type="protein sequence ID" value="ENSMUSP00000134863.2"/>
    <property type="gene ID" value="ENSMUSG00000052613.18"/>
</dbReference>
<dbReference type="Ensembl" id="ENSMUST00000147189.9">
    <molecule id="Q99PJ1-7"/>
    <property type="protein sequence ID" value="ENSMUSP00000122940.3"/>
    <property type="gene ID" value="ENSMUSG00000052613.18"/>
</dbReference>
<dbReference type="Ensembl" id="ENSMUST00000151116.9">
    <molecule id="Q99PJ1-10"/>
    <property type="protein sequence ID" value="ENSMUSP00000119662.3"/>
    <property type="gene ID" value="ENSMUSG00000052613.18"/>
</dbReference>
<dbReference type="Ensembl" id="ENSMUST00000152655.9">
    <molecule id="Q99PJ1-17"/>
    <property type="protein sequence ID" value="ENSMUSP00000118201.3"/>
    <property type="gene ID" value="ENSMUSG00000052613.18"/>
</dbReference>
<dbReference type="Ensembl" id="ENSMUST00000152819.9">
    <molecule id="Q99PJ1-15"/>
    <property type="protein sequence ID" value="ENSMUSP00000123647.3"/>
    <property type="gene ID" value="ENSMUSG00000052613.18"/>
</dbReference>
<dbReference type="Ensembl" id="ENSMUST00000155701.9">
    <molecule id="Q99PJ1-14"/>
    <property type="protein sequence ID" value="ENSMUSP00000135495.2"/>
    <property type="gene ID" value="ENSMUSG00000052613.18"/>
</dbReference>
<dbReference type="Ensembl" id="ENSMUST00000177107.8">
    <molecule id="Q99PJ1-18"/>
    <property type="protein sequence ID" value="ENSMUSP00000135501.2"/>
    <property type="gene ID" value="ENSMUSG00000052613.18"/>
</dbReference>
<dbReference type="Ensembl" id="ENSMUST00000177420.7">
    <molecule id="Q99PJ1-21"/>
    <property type="protein sequence ID" value="ENSMUSP00000135849.2"/>
    <property type="gene ID" value="ENSMUSG00000052613.18"/>
</dbReference>
<dbReference type="Ensembl" id="ENSMUST00000191709.6">
    <molecule id="Q99PJ1-25"/>
    <property type="protein sequence ID" value="ENSMUSP00000142313.2"/>
    <property type="gene ID" value="ENSMUSG00000052613.18"/>
</dbReference>
<dbReference type="Ensembl" id="ENSMUST00000191854.6">
    <molecule id="Q99PJ1-19"/>
    <property type="protein sequence ID" value="ENSMUSP00000141973.2"/>
    <property type="gene ID" value="ENSMUSG00000052613.18"/>
</dbReference>
<dbReference type="Ensembl" id="ENSMUST00000193361.6">
    <molecule id="Q99PJ1-1"/>
    <property type="protein sequence ID" value="ENSMUSP00000141792.2"/>
    <property type="gene ID" value="ENSMUSG00000052613.18"/>
</dbReference>
<dbReference type="Ensembl" id="ENSMUST00000193739.6">
    <molecule id="Q99PJ1-26"/>
    <property type="protein sequence ID" value="ENSMUSP00000142173.2"/>
    <property type="gene ID" value="ENSMUSG00000052613.18"/>
</dbReference>
<dbReference type="GeneID" id="11994"/>
<dbReference type="KEGG" id="mmu:11994"/>
<dbReference type="UCSC" id="uc007fpf.2">
    <molecule id="Q99PJ1-21"/>
    <property type="organism name" value="mouse"/>
</dbReference>
<dbReference type="UCSC" id="uc007fpg.2">
    <molecule id="Q99PJ1-22"/>
    <property type="organism name" value="mouse"/>
</dbReference>
<dbReference type="UCSC" id="uc007fph.2">
    <molecule id="Q99PJ1-10"/>
    <property type="organism name" value="mouse"/>
</dbReference>
<dbReference type="UCSC" id="uc007fpi.2">
    <molecule id="Q99PJ1-8"/>
    <property type="organism name" value="mouse"/>
</dbReference>
<dbReference type="UCSC" id="uc007fpj.2">
    <molecule id="Q99PJ1-9"/>
    <property type="organism name" value="mouse"/>
</dbReference>
<dbReference type="UCSC" id="uc007fpk.2">
    <molecule id="Q99PJ1-1"/>
    <property type="organism name" value="mouse"/>
</dbReference>
<dbReference type="UCSC" id="uc007fpl.2">
    <molecule id="Q99PJ1-4"/>
    <property type="organism name" value="mouse"/>
</dbReference>
<dbReference type="UCSC" id="uc007fpn.2">
    <molecule id="Q99PJ1-6"/>
    <property type="organism name" value="mouse"/>
</dbReference>
<dbReference type="UCSC" id="uc007fpo.2">
    <molecule id="Q99PJ1-17"/>
    <property type="organism name" value="mouse"/>
</dbReference>
<dbReference type="UCSC" id="uc007fpq.2">
    <molecule id="Q99PJ1-20"/>
    <property type="organism name" value="mouse"/>
</dbReference>
<dbReference type="UCSC" id="uc007fpr.2">
    <molecule id="Q99PJ1-11"/>
    <property type="organism name" value="mouse"/>
</dbReference>
<dbReference type="UCSC" id="uc011xfz.1">
    <molecule id="Q99PJ1-23"/>
    <property type="organism name" value="mouse"/>
</dbReference>
<dbReference type="UCSC" id="uc011xgb.1">
    <molecule id="Q99PJ1-7"/>
    <property type="organism name" value="mouse"/>
</dbReference>
<dbReference type="UCSC" id="uc011xgc.1">
    <molecule id="Q99PJ1-5"/>
    <property type="organism name" value="mouse"/>
</dbReference>
<dbReference type="UCSC" id="uc011xgd.1">
    <molecule id="Q99PJ1-15"/>
    <property type="organism name" value="mouse"/>
</dbReference>
<dbReference type="UCSC" id="uc011xge.1">
    <molecule id="Q99PJ1-16"/>
    <property type="organism name" value="mouse"/>
</dbReference>
<dbReference type="UCSC" id="uc011xgf.1">
    <molecule id="Q99PJ1-14"/>
    <property type="organism name" value="mouse"/>
</dbReference>
<dbReference type="UCSC" id="uc011xgg.1">
    <molecule id="Q99PJ1-18"/>
    <property type="organism name" value="mouse"/>
</dbReference>
<dbReference type="UCSC" id="uc011xgh.1">
    <molecule id="Q99PJ1-19"/>
    <property type="organism name" value="mouse"/>
</dbReference>
<dbReference type="UCSC" id="uc033fqa.1">
    <molecule id="Q99PJ1-2"/>
    <property type="organism name" value="mouse"/>
</dbReference>
<dbReference type="AGR" id="MGI:1891428"/>
<dbReference type="CTD" id="65217"/>
<dbReference type="MGI" id="MGI:1891428">
    <property type="gene designation" value="Pcdh15"/>
</dbReference>
<dbReference type="VEuPathDB" id="HostDB:ENSMUSG00000052613"/>
<dbReference type="eggNOG" id="KOG3594">
    <property type="taxonomic scope" value="Eukaryota"/>
</dbReference>
<dbReference type="GeneTree" id="ENSGT00940000156675"/>
<dbReference type="HOGENOM" id="CLU_001945_0_0_1"/>
<dbReference type="InParanoid" id="Q99PJ1"/>
<dbReference type="OrthoDB" id="10029135at2759"/>
<dbReference type="PhylomeDB" id="Q99PJ1"/>
<dbReference type="TreeFam" id="TF326779"/>
<dbReference type="BioGRID-ORCS" id="11994">
    <property type="hits" value="3 hits in 76 CRISPR screens"/>
</dbReference>
<dbReference type="ChiTaRS" id="Pcdh15">
    <property type="organism name" value="mouse"/>
</dbReference>
<dbReference type="EvolutionaryTrace" id="Q99PJ1"/>
<dbReference type="PRO" id="PR:Q99PJ1"/>
<dbReference type="Proteomes" id="UP000000589">
    <property type="component" value="Chromosome 10"/>
</dbReference>
<dbReference type="RNAct" id="Q99PJ1">
    <property type="molecule type" value="protein"/>
</dbReference>
<dbReference type="Bgee" id="ENSMUSG00000052613">
    <property type="expression patterns" value="Expressed in retinal neural layer and 127 other cell types or tissues"/>
</dbReference>
<dbReference type="ExpressionAtlas" id="Q99PJ1">
    <property type="expression patterns" value="baseline and differential"/>
</dbReference>
<dbReference type="GO" id="GO:0005737">
    <property type="term" value="C:cytoplasm"/>
    <property type="evidence" value="ECO:0000314"/>
    <property type="project" value="MGI"/>
</dbReference>
<dbReference type="GO" id="GO:0005576">
    <property type="term" value="C:extracellular region"/>
    <property type="evidence" value="ECO:0007669"/>
    <property type="project" value="UniProtKB-SubCell"/>
</dbReference>
<dbReference type="GO" id="GO:0016020">
    <property type="term" value="C:membrane"/>
    <property type="evidence" value="ECO:0000250"/>
    <property type="project" value="MGI"/>
</dbReference>
<dbReference type="GO" id="GO:0001750">
    <property type="term" value="C:photoreceptor outer segment"/>
    <property type="evidence" value="ECO:0000314"/>
    <property type="project" value="MGI"/>
</dbReference>
<dbReference type="GO" id="GO:0005886">
    <property type="term" value="C:plasma membrane"/>
    <property type="evidence" value="ECO:0000314"/>
    <property type="project" value="MGI"/>
</dbReference>
<dbReference type="GO" id="GO:0032420">
    <property type="term" value="C:stereocilium"/>
    <property type="evidence" value="ECO:0000314"/>
    <property type="project" value="HGNC-UCL"/>
</dbReference>
<dbReference type="GO" id="GO:0032421">
    <property type="term" value="C:stereocilium bundle"/>
    <property type="evidence" value="ECO:0000314"/>
    <property type="project" value="MGI"/>
</dbReference>
<dbReference type="GO" id="GO:0005509">
    <property type="term" value="F:calcium ion binding"/>
    <property type="evidence" value="ECO:0007669"/>
    <property type="project" value="InterPro"/>
</dbReference>
<dbReference type="GO" id="GO:0051017">
    <property type="term" value="P:actin filament bundle assembly"/>
    <property type="evidence" value="ECO:0000315"/>
    <property type="project" value="MGI"/>
</dbReference>
<dbReference type="GO" id="GO:0007015">
    <property type="term" value="P:actin filament organization"/>
    <property type="evidence" value="ECO:0000315"/>
    <property type="project" value="MGI"/>
</dbReference>
<dbReference type="GO" id="GO:0007628">
    <property type="term" value="P:adult walking behavior"/>
    <property type="evidence" value="ECO:0000315"/>
    <property type="project" value="MGI"/>
</dbReference>
<dbReference type="GO" id="GO:0060088">
    <property type="term" value="P:auditory receptor cell stereocilium organization"/>
    <property type="evidence" value="ECO:0000315"/>
    <property type="project" value="MGI"/>
</dbReference>
<dbReference type="GO" id="GO:0050973">
    <property type="term" value="P:detection of mechanical stimulus involved in equilibrioception"/>
    <property type="evidence" value="ECO:0000315"/>
    <property type="project" value="MGI"/>
</dbReference>
<dbReference type="GO" id="GO:0050910">
    <property type="term" value="P:detection of mechanical stimulus involved in sensory perception of sound"/>
    <property type="evidence" value="ECO:0000315"/>
    <property type="project" value="MGI"/>
</dbReference>
<dbReference type="GO" id="GO:0007156">
    <property type="term" value="P:homophilic cell adhesion via plasma membrane adhesion molecules"/>
    <property type="evidence" value="ECO:0007669"/>
    <property type="project" value="InterPro"/>
</dbReference>
<dbReference type="GO" id="GO:0042491">
    <property type="term" value="P:inner ear auditory receptor cell differentiation"/>
    <property type="evidence" value="ECO:0000315"/>
    <property type="project" value="MGI"/>
</dbReference>
<dbReference type="GO" id="GO:0048839">
    <property type="term" value="P:inner ear development"/>
    <property type="evidence" value="ECO:0000315"/>
    <property type="project" value="MGI"/>
</dbReference>
<dbReference type="GO" id="GO:0060122">
    <property type="term" value="P:inner ear receptor cell stereocilium organization"/>
    <property type="evidence" value="ECO:0000315"/>
    <property type="project" value="MGI"/>
</dbReference>
<dbReference type="GO" id="GO:0007626">
    <property type="term" value="P:locomotory behavior"/>
    <property type="evidence" value="ECO:0000315"/>
    <property type="project" value="MGI"/>
</dbReference>
<dbReference type="GO" id="GO:0002009">
    <property type="term" value="P:morphogenesis of an epithelium"/>
    <property type="evidence" value="ECO:0000315"/>
    <property type="project" value="MGI"/>
</dbReference>
<dbReference type="GO" id="GO:0035264">
    <property type="term" value="P:multicellular organism growth"/>
    <property type="evidence" value="ECO:0000315"/>
    <property type="project" value="MGI"/>
</dbReference>
<dbReference type="GO" id="GO:1905515">
    <property type="term" value="P:non-motile cilium assembly"/>
    <property type="evidence" value="ECO:0000315"/>
    <property type="project" value="MGI"/>
</dbReference>
<dbReference type="GO" id="GO:0051592">
    <property type="term" value="P:response to calcium ion"/>
    <property type="evidence" value="ECO:0007669"/>
    <property type="project" value="Ensembl"/>
</dbReference>
<dbReference type="GO" id="GO:0060013">
    <property type="term" value="P:righting reflex"/>
    <property type="evidence" value="ECO:0000315"/>
    <property type="project" value="MGI"/>
</dbReference>
<dbReference type="GO" id="GO:0007605">
    <property type="term" value="P:sensory perception of sound"/>
    <property type="evidence" value="ECO:0000315"/>
    <property type="project" value="MGI"/>
</dbReference>
<dbReference type="GO" id="GO:0001964">
    <property type="term" value="P:startle response"/>
    <property type="evidence" value="ECO:0000315"/>
    <property type="project" value="MGI"/>
</dbReference>
<dbReference type="GO" id="GO:0007601">
    <property type="term" value="P:visual perception"/>
    <property type="evidence" value="ECO:0000315"/>
    <property type="project" value="MGI"/>
</dbReference>
<dbReference type="CDD" id="cd11304">
    <property type="entry name" value="Cadherin_repeat"/>
    <property type="match status" value="9"/>
</dbReference>
<dbReference type="FunFam" id="2.60.40.3430:FF:000001">
    <property type="entry name" value="protocadherin-15 isoform X1"/>
    <property type="match status" value="1"/>
</dbReference>
<dbReference type="FunFam" id="2.60.40.60:FF:000047">
    <property type="entry name" value="protocadherin-15 isoform X1"/>
    <property type="match status" value="1"/>
</dbReference>
<dbReference type="FunFam" id="2.60.40.60:FF:000048">
    <property type="entry name" value="protocadherin-15 isoform X1"/>
    <property type="match status" value="1"/>
</dbReference>
<dbReference type="FunFam" id="2.60.40.60:FF:000049">
    <property type="entry name" value="protocadherin-15 isoform X1"/>
    <property type="match status" value="1"/>
</dbReference>
<dbReference type="FunFam" id="2.60.40.60:FF:000050">
    <property type="entry name" value="protocadherin-15 isoform X1"/>
    <property type="match status" value="1"/>
</dbReference>
<dbReference type="FunFam" id="2.60.40.60:FF:000054">
    <property type="entry name" value="protocadherin-15 isoform X1"/>
    <property type="match status" value="1"/>
</dbReference>
<dbReference type="FunFam" id="2.60.40.60:FF:000055">
    <property type="entry name" value="protocadherin-15 isoform X1"/>
    <property type="match status" value="1"/>
</dbReference>
<dbReference type="FunFam" id="2.60.40.60:FF:000056">
    <property type="entry name" value="protocadherin-15 isoform X1"/>
    <property type="match status" value="1"/>
</dbReference>
<dbReference type="FunFam" id="2.60.40.60:FF:000057">
    <property type="entry name" value="protocadherin-15 isoform X1"/>
    <property type="match status" value="1"/>
</dbReference>
<dbReference type="FunFam" id="2.60.40.60:FF:000063">
    <property type="entry name" value="protocadherin-15 isoform X1"/>
    <property type="match status" value="1"/>
</dbReference>
<dbReference type="FunFam" id="2.60.40.60:FF:000070">
    <property type="entry name" value="protocadherin-15 isoform X1"/>
    <property type="match status" value="1"/>
</dbReference>
<dbReference type="Gene3D" id="2.60.40.3430">
    <property type="match status" value="1"/>
</dbReference>
<dbReference type="Gene3D" id="2.60.40.60">
    <property type="entry name" value="Cadherins"/>
    <property type="match status" value="10"/>
</dbReference>
<dbReference type="InterPro" id="IPR050971">
    <property type="entry name" value="Cadherin-domain_protein"/>
</dbReference>
<dbReference type="InterPro" id="IPR002126">
    <property type="entry name" value="Cadherin-like_dom"/>
</dbReference>
<dbReference type="InterPro" id="IPR015919">
    <property type="entry name" value="Cadherin-like_sf"/>
</dbReference>
<dbReference type="InterPro" id="IPR020894">
    <property type="entry name" value="Cadherin_CS"/>
</dbReference>
<dbReference type="InterPro" id="IPR041149">
    <property type="entry name" value="EC_dom"/>
</dbReference>
<dbReference type="InterPro" id="IPR030718">
    <property type="entry name" value="EC_dom_sf"/>
</dbReference>
<dbReference type="InterPro" id="IPR056989">
    <property type="entry name" value="PCDH15_12th_dom"/>
</dbReference>
<dbReference type="PANTHER" id="PTHR24025">
    <property type="entry name" value="DESMOGLEIN FAMILY MEMBER"/>
    <property type="match status" value="1"/>
</dbReference>
<dbReference type="PANTHER" id="PTHR24025:SF31">
    <property type="entry name" value="NEURAL-CADHERIN"/>
    <property type="match status" value="1"/>
</dbReference>
<dbReference type="Pfam" id="PF00028">
    <property type="entry name" value="Cadherin"/>
    <property type="match status" value="8"/>
</dbReference>
<dbReference type="Pfam" id="PF18432">
    <property type="entry name" value="ECD"/>
    <property type="match status" value="1"/>
</dbReference>
<dbReference type="Pfam" id="PF23206">
    <property type="entry name" value="PCDH15_12th"/>
    <property type="match status" value="1"/>
</dbReference>
<dbReference type="PRINTS" id="PR00205">
    <property type="entry name" value="CADHERIN"/>
</dbReference>
<dbReference type="SMART" id="SM00112">
    <property type="entry name" value="CA"/>
    <property type="match status" value="11"/>
</dbReference>
<dbReference type="SUPFAM" id="SSF49313">
    <property type="entry name" value="Cadherin-like"/>
    <property type="match status" value="10"/>
</dbReference>
<dbReference type="PROSITE" id="PS00232">
    <property type="entry name" value="CADHERIN_1"/>
    <property type="match status" value="4"/>
</dbReference>
<dbReference type="PROSITE" id="PS50268">
    <property type="entry name" value="CADHERIN_2"/>
    <property type="match status" value="11"/>
</dbReference>
<gene>
    <name type="primary">Pcdh15</name>
</gene>
<name>PCD15_MOUSE</name>
<evidence type="ECO:0000250" key="1"/>
<evidence type="ECO:0000255" key="2"/>
<evidence type="ECO:0000255" key="3">
    <source>
        <dbReference type="PROSITE-ProRule" id="PRU00043"/>
    </source>
</evidence>
<evidence type="ECO:0000256" key="4">
    <source>
        <dbReference type="SAM" id="MobiDB-lite"/>
    </source>
</evidence>
<evidence type="ECO:0000269" key="5">
    <source>
    </source>
</evidence>
<evidence type="ECO:0000269" key="6">
    <source>
    </source>
</evidence>
<evidence type="ECO:0000269" key="7">
    <source>
    </source>
</evidence>
<evidence type="ECO:0000269" key="8">
    <source>
    </source>
</evidence>
<evidence type="ECO:0000269" key="9">
    <source>
    </source>
</evidence>
<evidence type="ECO:0000269" key="10">
    <source>
    </source>
</evidence>
<evidence type="ECO:0000269" key="11">
    <source>
    </source>
</evidence>
<evidence type="ECO:0000269" key="12">
    <source>
    </source>
</evidence>
<evidence type="ECO:0000269" key="13">
    <source>
    </source>
</evidence>
<evidence type="ECO:0000269" key="14">
    <source>
    </source>
</evidence>
<evidence type="ECO:0000269" key="15">
    <source>
    </source>
</evidence>
<evidence type="ECO:0000269" key="16">
    <source>
    </source>
</evidence>
<evidence type="ECO:0000303" key="17">
    <source>
    </source>
</evidence>
<evidence type="ECO:0000303" key="18">
    <source>
    </source>
</evidence>
<evidence type="ECO:0000303" key="19">
    <source>
    </source>
</evidence>
<evidence type="ECO:0000303" key="20">
    <source>
    </source>
</evidence>
<evidence type="ECO:0000305" key="21"/>
<evidence type="ECO:0007829" key="22">
    <source>
        <dbReference type="PDB" id="4APX"/>
    </source>
</evidence>
<evidence type="ECO:0007829" key="23">
    <source>
        <dbReference type="PDB" id="4AQ8"/>
    </source>
</evidence>
<evidence type="ECO:0007829" key="24">
    <source>
        <dbReference type="PDB" id="5KJ4"/>
    </source>
</evidence>
<evidence type="ECO:0007829" key="25">
    <source>
        <dbReference type="PDB" id="5TPK"/>
    </source>
</evidence>
<evidence type="ECO:0007829" key="26">
    <source>
        <dbReference type="PDB" id="5W1D"/>
    </source>
</evidence>
<evidence type="ECO:0007829" key="27">
    <source>
        <dbReference type="PDB" id="6BWN"/>
    </source>
</evidence>
<evidence type="ECO:0007829" key="28">
    <source>
        <dbReference type="PDB" id="6C10"/>
    </source>
</evidence>
<evidence type="ECO:0007829" key="29">
    <source>
        <dbReference type="PDB" id="6CV7"/>
    </source>
</evidence>
<evidence type="ECO:0007829" key="30">
    <source>
        <dbReference type="PDB" id="6EET"/>
    </source>
</evidence>
<evidence type="ECO:0007829" key="31">
    <source>
        <dbReference type="PDB" id="8TON"/>
    </source>
</evidence>
<keyword id="KW-0002">3D-structure</keyword>
<keyword id="KW-0025">Alternative splicing</keyword>
<keyword id="KW-0106">Calcium</keyword>
<keyword id="KW-0130">Cell adhesion</keyword>
<keyword id="KW-1003">Cell membrane</keyword>
<keyword id="KW-0209">Deafness</keyword>
<keyword id="KW-0903">Direct protein sequencing</keyword>
<keyword id="KW-1015">Disulfide bond</keyword>
<keyword id="KW-0325">Glycoprotein</keyword>
<keyword id="KW-1009">Hearing</keyword>
<keyword id="KW-0472">Membrane</keyword>
<keyword id="KW-1185">Reference proteome</keyword>
<keyword id="KW-0677">Repeat</keyword>
<keyword id="KW-0964">Secreted</keyword>
<keyword id="KW-0732">Signal</keyword>
<keyword id="KW-0812">Transmembrane</keyword>
<keyword id="KW-1133">Transmembrane helix</keyword>
<sequence>MFLQFAVWKCLPHGILIASLLVVSWGQYDDDWQYEDCKLARGGPPATIVAIDEESRNGTILVDNMLIKGTAGGPDPTIELSLKDNVDYWVLLDPVKQMLFLNSTGRVLDRDPPMNIHSIVVQVQCVNKKVGTVIYHEVRIVVRDRNDNSPTFKHESYYATVNELTPVGTTIFTGFSGDNGATDIDDGPNGQIEYVIQYNPEDPTSNDTFEIPLMLTGNVVLRKRLNYEDKTRYYVIIQANDRAQNLNERRTTTTTLTVDVLDGDDLGPMFLPCVLVPNTRDCRPLTYQAAIPELRTPEELNPILVTPPIQAIDQDRNIQPPSDRPGILYSILVGTPEDYPRFFHMHPRTAELTLLEPVNRDFHQKFDLVIKAEQDNGHPLPAFASLHIEILDENNQSPYFTMPSYQGYILESAPVGATISESLNLTTPLRIVALDKDIEDTKDPELHLFLNDYTSVFTVTPTGITRYLTLLQPVDREEQQTYTFLITAFDGVQESEPVVVNIRVMDANDNTPTFPEISYDVYVYTDMSPGDSVIQLTAVDADEGSNGEISYEILVGGKGDFVINKTTGLVSIAPGVELIVGQTYALTVQASDNAPPAERRHSICTVYIEVLPPNNQSPPRFPQLMYSLEVSEAMRIGAILLNLQATDREGDPITYAIENGDPQRVFNLSETTGILSLGKALDRESTDRYILIVTASDGRPDGTSTATVNIVVTDVNDNAPVFDPYLPRNLSVVEEEANAFVGQVRATDPDAGINGQVHYSLGNFNNLFRITSNGSIYTAVKLNREARDHYELVVVATDGAVHPRHSTLTLYIKVLDIDDNSPVFTNSTYTVVVEENLPAGTSFLQIEAKDVDLGANVSYRIRSPEVKHLFALHPFTGELSLLRSLDYEAFPDQEASITFLVEAFDIYGTMPPGIATVTVIVKDMNDYPPVFSKRIYKGMVAPDAVKGTPITTVYAEDADPPGMPASRVRYRVDDVQFPYPASIFDVEEDSGRVVTRVNLNEEPTTIFKLVVVAFDDGEPVMSSSATVRILVLHPGEIPRFTQEEYRPPPVSELAARGTVVGVISAAAINQSIVYSIVAGNEEDKFGINNVTGVIYVNSPLDYETRTSYVLRVQADSLEVVLANLRVPSKSNTAKVYIEIQDENDHPPVFQKKFYIGGVSEDARMFASVLRVKATDRDTGNYSAMAYRLIIPPIKEGKEGFVVETYTGLIKTAMLFHNMRRSYFKFQVIATDDYGKGLSGKADVLVSVVNQLDMQVIVSNVPPTLVEKKIEDLTEILDRYVQEQIPGAKVVVESIGARRHGDAYSLEDYSKCDLTVYAIDPQTNRAIDRNELFKFLDGKLLDINKDFQPYYGEGGRILEIRTPEAVTSIKKRGESLGYTEGALLALAFIIILCCIPAILVVLVSYRQFKVRQAECTKTARIQSAMPAAKPAAPVPAAPAPPPPPPPPPPGAHLYEELGESAMHNLFLLYHFEQSRGNNSVPEDRSSHRDGMAFSSSTTESHEPAHVEGPLKESQPNPARTFSFVPDEDNLSTHNPLYMESIGQRSTNSDLQPRTDFEELLAPRTQVKSQSLRGPREKIQRVWNQSVSFPRRLMWKAPNRPETIDLVEWQITNQRAECESARCHPSQRGSSNVLLATEDAHESEKEGGHRDTLIVQQTEQLKSLSSGSSFSSSWSHFSFSTLPTISRAVELGSEPNVVTSPADCTLELSPPLRPRILNSLSSKRETPTCASDTEPKRNSFEIAPHPPSISAPLPHPPLPRPPIAFTTFPLPLSPPNPPPPQLVTFSLPISTPPTSSLPLPPPLSLPPPPRPPAPRLFPQPPSTSIPSTDSISAPAAKCTASATHARETTSTTQPPASNPQWGAEPHRHPKGILRHVKNLAELEKSVSNMYSHIEKNCPPADPSKLHTFCPAEKTGMKITHDQSQETLVRVVEGIDVQPHSQSTSL</sequence>